<organismHost>
    <name type="scientific">Homo sapiens</name>
    <name type="common">Human</name>
    <dbReference type="NCBI Taxonomy" id="9606"/>
</organismHost>
<evidence type="ECO:0000250" key="1"/>
<evidence type="ECO:0000250" key="2">
    <source>
        <dbReference type="UniProtKB" id="O92972"/>
    </source>
</evidence>
<evidence type="ECO:0000250" key="3">
    <source>
        <dbReference type="UniProtKB" id="P26662"/>
    </source>
</evidence>
<evidence type="ECO:0000250" key="4">
    <source>
        <dbReference type="UniProtKB" id="P26663"/>
    </source>
</evidence>
<evidence type="ECO:0000250" key="5">
    <source>
        <dbReference type="UniProtKB" id="P26664"/>
    </source>
</evidence>
<evidence type="ECO:0000250" key="6">
    <source>
        <dbReference type="UniProtKB" id="P27958"/>
    </source>
</evidence>
<evidence type="ECO:0000250" key="7">
    <source>
        <dbReference type="UniProtKB" id="P29846"/>
    </source>
</evidence>
<evidence type="ECO:0000250" key="8">
    <source>
        <dbReference type="UniProtKB" id="Q01403"/>
    </source>
</evidence>
<evidence type="ECO:0000250" key="9">
    <source>
        <dbReference type="UniProtKB" id="Q03463"/>
    </source>
</evidence>
<evidence type="ECO:0000250" key="10">
    <source>
        <dbReference type="UniProtKB" id="Q5EG65"/>
    </source>
</evidence>
<evidence type="ECO:0000250" key="11">
    <source>
        <dbReference type="UniProtKB" id="Q913V3"/>
    </source>
</evidence>
<evidence type="ECO:0000250" key="12">
    <source>
        <dbReference type="UniProtKB" id="Q99IB8"/>
    </source>
</evidence>
<evidence type="ECO:0000250" key="13">
    <source>
        <dbReference type="UniProtKB" id="Q9WMX2"/>
    </source>
</evidence>
<evidence type="ECO:0000255" key="14"/>
<evidence type="ECO:0000255" key="15">
    <source>
        <dbReference type="PROSITE-ProRule" id="PRU00539"/>
    </source>
</evidence>
<evidence type="ECO:0000255" key="16">
    <source>
        <dbReference type="PROSITE-ProRule" id="PRU00541"/>
    </source>
</evidence>
<evidence type="ECO:0000255" key="17">
    <source>
        <dbReference type="PROSITE-ProRule" id="PRU01030"/>
    </source>
</evidence>
<evidence type="ECO:0000255" key="18">
    <source>
        <dbReference type="PROSITE-ProRule" id="PRU01166"/>
    </source>
</evidence>
<evidence type="ECO:0000256" key="19">
    <source>
        <dbReference type="SAM" id="MobiDB-lite"/>
    </source>
</evidence>
<evidence type="ECO:0000305" key="20"/>
<evidence type="ECO:0007829" key="21">
    <source>
        <dbReference type="PDB" id="6P6Z"/>
    </source>
</evidence>
<name>POLG_HCVED</name>
<organism>
    <name type="scientific">Hepatitis C virus genotype 4a (isolate ED43)</name>
    <name type="common">HCV</name>
    <dbReference type="NCBI Taxonomy" id="356418"/>
    <lineage>
        <taxon>Viruses</taxon>
        <taxon>Riboviria</taxon>
        <taxon>Orthornavirae</taxon>
        <taxon>Kitrinoviricota</taxon>
        <taxon>Flasuviricetes</taxon>
        <taxon>Amarillovirales</taxon>
        <taxon>Flaviviridae</taxon>
        <taxon>Hepacivirus</taxon>
        <taxon>Hepacivirus hominis</taxon>
    </lineage>
</organism>
<feature type="initiator methionine" description="Removed; by host" evidence="5">
    <location>
        <position position="1"/>
    </location>
</feature>
<feature type="chain" id="PRO_0000450900" description="Genome polyprotein">
    <location>
        <begin position="2"/>
        <end position="3008"/>
    </location>
</feature>
<feature type="chain" id="PRO_0000045532" description="Core protein precursor">
    <location>
        <begin position="2"/>
        <end position="191"/>
    </location>
</feature>
<feature type="chain" id="PRO_0000045533" description="Mature core protein">
    <location>
        <begin position="2"/>
        <end position="177"/>
    </location>
</feature>
<feature type="propeptide" id="PRO_0000045534" description="ER anchor for the core protein, removed in mature form by host signal peptidase">
    <location>
        <begin position="178"/>
        <end position="191"/>
    </location>
</feature>
<feature type="chain" id="PRO_0000045535" description="Envelope glycoprotein E1">
    <location>
        <begin position="192"/>
        <end position="383"/>
    </location>
</feature>
<feature type="chain" id="PRO_0000045536" description="Envelope glycoprotein E2">
    <location>
        <begin position="384"/>
        <end position="746"/>
    </location>
</feature>
<feature type="chain" id="PRO_0000045537" description="Viroporin p7">
    <location>
        <begin position="747"/>
        <end position="809"/>
    </location>
</feature>
<feature type="chain" id="PRO_0000045538" description="Protease NS2" evidence="17">
    <location>
        <begin position="810"/>
        <end position="1026"/>
    </location>
</feature>
<feature type="chain" id="PRO_0000045539" description="Serine protease/helicase NS3">
    <location>
        <begin position="1027"/>
        <end position="1657"/>
    </location>
</feature>
<feature type="chain" id="PRO_0000045540" description="Non-structural protein 4A">
    <location>
        <begin position="1658"/>
        <end position="1711"/>
    </location>
</feature>
<feature type="chain" id="PRO_0000045541" description="Non-structural protein 4B">
    <location>
        <begin position="1712"/>
        <end position="1972"/>
    </location>
</feature>
<feature type="chain" id="PRO_0000045542" description="Non-structural protein 5A">
    <location>
        <begin position="1973"/>
        <end position="2417"/>
    </location>
</feature>
<feature type="chain" id="PRO_0000045543" description="RNA-directed RNA polymerase">
    <location>
        <begin position="2418"/>
        <end position="3008"/>
    </location>
</feature>
<feature type="topological domain" description="Cytoplasmic" evidence="14">
    <location>
        <begin position="2"/>
        <end position="168"/>
    </location>
</feature>
<feature type="transmembrane region" description="Helical" evidence="14">
    <location>
        <begin position="169"/>
        <end position="189"/>
    </location>
</feature>
<feature type="topological domain" description="Lumenal" evidence="6">
    <location>
        <begin position="190"/>
        <end position="358"/>
    </location>
</feature>
<feature type="transmembrane region" description="Helical" evidence="6">
    <location>
        <begin position="359"/>
        <end position="379"/>
    </location>
</feature>
<feature type="topological domain" description="Lumenal" evidence="6">
    <location>
        <begin position="380"/>
        <end position="725"/>
    </location>
</feature>
<feature type="transmembrane region" description="Helical" evidence="6">
    <location>
        <begin position="726"/>
        <end position="746"/>
    </location>
</feature>
<feature type="topological domain" description="Lumenal" evidence="6">
    <location>
        <begin position="747"/>
        <end position="757"/>
    </location>
</feature>
<feature type="transmembrane region" description="Helical" evidence="6">
    <location>
        <begin position="758"/>
        <end position="778"/>
    </location>
</feature>
<feature type="topological domain" description="Cytoplasmic" evidence="14">
    <location>
        <begin position="779"/>
        <end position="782"/>
    </location>
</feature>
<feature type="transmembrane region" description="Helical" evidence="6">
    <location>
        <begin position="783"/>
        <end position="803"/>
    </location>
</feature>
<feature type="topological domain" description="Lumenal" evidence="6">
    <location>
        <begin position="804"/>
        <end position="813"/>
    </location>
</feature>
<feature type="transmembrane region" description="Helical" evidence="13">
    <location>
        <begin position="814"/>
        <end position="834"/>
    </location>
</feature>
<feature type="topological domain" description="Cytoplasmic" evidence="13">
    <location>
        <begin position="835"/>
        <end position="881"/>
    </location>
</feature>
<feature type="transmembrane region" description="Helical" evidence="13">
    <location>
        <begin position="882"/>
        <end position="902"/>
    </location>
</feature>
<feature type="topological domain" description="Lumenal" evidence="13">
    <location>
        <begin position="903"/>
        <end position="928"/>
    </location>
</feature>
<feature type="transmembrane region" description="Helical" evidence="13">
    <location>
        <begin position="929"/>
        <end position="949"/>
    </location>
</feature>
<feature type="topological domain" description="Cytoplasmic" evidence="13">
    <location>
        <begin position="950"/>
        <end position="1657"/>
    </location>
</feature>
<feature type="transmembrane region" description="Helical" evidence="14">
    <location>
        <begin position="1658"/>
        <end position="1678"/>
    </location>
</feature>
<feature type="topological domain" description="Cytoplasmic" evidence="14">
    <location>
        <begin position="1679"/>
        <end position="1805"/>
    </location>
</feature>
<feature type="transmembrane region" description="Helical" evidence="14">
    <location>
        <begin position="1806"/>
        <end position="1826"/>
    </location>
</feature>
<feature type="topological domain" description="Lumenal" evidence="6">
    <location>
        <begin position="1827"/>
        <end position="1828"/>
    </location>
</feature>
<feature type="transmembrane region" description="Helical" evidence="14">
    <location>
        <begin position="1829"/>
        <end position="1849"/>
    </location>
</feature>
<feature type="topological domain" description="Cytoplasmic" evidence="14">
    <location>
        <position position="1850"/>
    </location>
</feature>
<feature type="transmembrane region" description="Helical" evidence="14">
    <location>
        <begin position="1851"/>
        <end position="1871"/>
    </location>
</feature>
<feature type="topological domain" description="Lumenal" evidence="14">
    <location>
        <begin position="1872"/>
        <end position="1881"/>
    </location>
</feature>
<feature type="transmembrane region" description="Helical" evidence="14">
    <location>
        <begin position="1882"/>
        <end position="1902"/>
    </location>
</feature>
<feature type="topological domain" description="Cytoplasmic" evidence="14">
    <location>
        <begin position="1903"/>
        <end position="1972"/>
    </location>
</feature>
<feature type="intramembrane region" evidence="6">
    <location>
        <begin position="1973"/>
        <end position="2002"/>
    </location>
</feature>
<feature type="topological domain" description="Cytoplasmic" evidence="6">
    <location>
        <begin position="2003"/>
        <end position="2987"/>
    </location>
</feature>
<feature type="transmembrane region" description="Helical" evidence="6">
    <location>
        <begin position="2988"/>
        <end position="3008"/>
    </location>
</feature>
<feature type="domain" description="Peptidase C18" evidence="17">
    <location>
        <begin position="903"/>
        <end position="1026"/>
    </location>
</feature>
<feature type="domain" description="Peptidase S29" evidence="18">
    <location>
        <begin position="1027"/>
        <end position="1208"/>
    </location>
</feature>
<feature type="domain" description="Helicase ATP-binding" evidence="16">
    <location>
        <begin position="1217"/>
        <end position="1369"/>
    </location>
</feature>
<feature type="domain" description="RdRp catalytic" evidence="15">
    <location>
        <begin position="2631"/>
        <end position="2749"/>
    </location>
</feature>
<feature type="region of interest" description="Disordered" evidence="6">
    <location>
        <begin position="2"/>
        <end position="75"/>
    </location>
</feature>
<feature type="region of interest" description="Interaction with DDX3X" evidence="10">
    <location>
        <begin position="2"/>
        <end position="59"/>
    </location>
</feature>
<feature type="region of interest" description="Interaction with EIF2AK2/PKR" evidence="3">
    <location>
        <begin position="2"/>
        <end position="58"/>
    </location>
</feature>
<feature type="region of interest" description="Interaction with STAT1" evidence="3">
    <location>
        <begin position="2"/>
        <end position="23"/>
    </location>
</feature>
<feature type="region of interest" description="Important for endoplasmic reticulum and mitochondrial localization" evidence="3">
    <location>
        <begin position="112"/>
        <end position="152"/>
    </location>
</feature>
<feature type="region of interest" description="Interaction with APOA2" evidence="7">
    <location>
        <begin position="122"/>
        <end position="173"/>
    </location>
</feature>
<feature type="region of interest" description="Important for lipid droplets localization" evidence="6">
    <location>
        <begin position="164"/>
        <end position="167"/>
    </location>
</feature>
<feature type="region of interest" description="Important for fusion" evidence="6">
    <location>
        <begin position="265"/>
        <end position="296"/>
    </location>
</feature>
<feature type="region of interest" description="HVR1" evidence="6">
    <location>
        <begin position="385"/>
        <end position="412"/>
    </location>
</feature>
<feature type="region of interest" description="HVR2" evidence="6">
    <location>
        <begin position="475"/>
        <end position="479"/>
    </location>
</feature>
<feature type="region of interest" description="CD81-binding 1" evidence="4">
    <location>
        <begin position="481"/>
        <end position="494"/>
    </location>
</feature>
<feature type="region of interest" description="CD81-binding 2" evidence="4">
    <location>
        <begin position="545"/>
        <end position="552"/>
    </location>
</feature>
<feature type="region of interest" description="PKR/eIF2-alpha phosphorylation homology domain (PePHD)" evidence="1">
    <location>
        <begin position="660"/>
        <end position="671"/>
    </location>
</feature>
<feature type="region of interest" description="Protease NS2-3" evidence="4">
    <location>
        <begin position="904"/>
        <end position="1206"/>
    </location>
</feature>
<feature type="region of interest" description="Interaction with host SCPS1" evidence="12">
    <location>
        <begin position="929"/>
        <end position="949"/>
    </location>
</feature>
<feature type="region of interest" description="RNA-binding" evidence="4">
    <location>
        <begin position="1486"/>
        <end position="1498"/>
    </location>
</feature>
<feature type="region of interest" description="NS3-binding" evidence="6">
    <location>
        <begin position="1679"/>
        <end position="1690"/>
    </location>
</feature>
<feature type="region of interest" description="Transcriptional activation" evidence="14">
    <location>
        <begin position="2120"/>
        <end position="2329"/>
    </location>
</feature>
<feature type="region of interest" description="FKBP8-binding" evidence="3">
    <location>
        <begin position="2120"/>
        <end position="2208"/>
    </location>
</feature>
<feature type="region of interest" description="Interaction with non-structural protein 4A" evidence="3">
    <location>
        <begin position="2135"/>
        <end position="2139"/>
    </location>
</feature>
<feature type="region of interest" description="Interaction with host SKP2" evidence="6">
    <location>
        <begin position="2189"/>
        <end position="2435"/>
    </location>
</feature>
<feature type="region of interest" description="Interaction with EIF2AK2/PKR" evidence="4">
    <location>
        <begin position="2210"/>
        <end position="2272"/>
    </location>
</feature>
<feature type="region of interest" description="ISDR" evidence="3">
    <location>
        <begin position="2210"/>
        <end position="2245"/>
    </location>
</feature>
<feature type="region of interest" description="NS4B-binding" evidence="14">
    <location>
        <begin position="2245"/>
        <end position="2303"/>
    </location>
</feature>
<feature type="region of interest" description="V3">
    <location>
        <begin position="2296"/>
        <end position="2373"/>
    </location>
</feature>
<feature type="region of interest" description="Disordered" evidence="19">
    <location>
        <begin position="2346"/>
        <end position="2406"/>
    </location>
</feature>
<feature type="short sequence motif" description="Nuclear localization signal" evidence="12">
    <location>
        <begin position="5"/>
        <end position="13"/>
    </location>
</feature>
<feature type="short sequence motif" description="Nuclear localization signal" evidence="12">
    <location>
        <begin position="38"/>
        <end position="43"/>
    </location>
</feature>
<feature type="short sequence motif" description="Nuclear localization signal" evidence="12">
    <location>
        <begin position="58"/>
        <end position="64"/>
    </location>
</feature>
<feature type="short sequence motif" description="Nuclear localization signal" evidence="12">
    <location>
        <begin position="66"/>
        <end position="71"/>
    </location>
</feature>
<feature type="short sequence motif" description="DECH box" evidence="12">
    <location>
        <begin position="1316"/>
        <end position="1319"/>
    </location>
</feature>
<feature type="short sequence motif" description="SH3-binding" evidence="14">
    <location>
        <begin position="2319"/>
        <end position="2322"/>
    </location>
</feature>
<feature type="short sequence motif" description="Nuclear localization signal" evidence="3">
    <location>
        <begin position="2324"/>
        <end position="2332"/>
    </location>
</feature>
<feature type="compositionally biased region" description="Basic residues" evidence="19">
    <location>
        <begin position="7"/>
        <end position="16"/>
    </location>
</feature>
<feature type="compositionally biased region" description="Low complexity" evidence="19">
    <location>
        <begin position="32"/>
        <end position="47"/>
    </location>
</feature>
<feature type="compositionally biased region" description="Basic residues" evidence="19">
    <location>
        <begin position="58"/>
        <end position="68"/>
    </location>
</feature>
<feature type="active site" description="For protease NS2 activity; shared with dimeric partner" evidence="17">
    <location>
        <position position="952"/>
    </location>
</feature>
<feature type="active site" description="For protease NS2 activity; shared with dimeric partner" evidence="17">
    <location>
        <position position="972"/>
    </location>
</feature>
<feature type="active site" description="For protease NS2 activity; shared with dimeric partner" evidence="17">
    <location>
        <position position="993"/>
    </location>
</feature>
<feature type="active site" description="Charge relay system; for serine protease NS3 activity" evidence="18">
    <location>
        <position position="1083"/>
    </location>
</feature>
<feature type="active site" description="Charge relay system; for serine protease NS3 activity" evidence="18">
    <location>
        <position position="1107"/>
    </location>
</feature>
<feature type="active site" description="Charge relay system; for serine protease NS3 activity" evidence="18">
    <location>
        <position position="1165"/>
    </location>
</feature>
<feature type="binding site" evidence="18">
    <location>
        <position position="1123"/>
    </location>
    <ligand>
        <name>Zn(2+)</name>
        <dbReference type="ChEBI" id="CHEBI:29105"/>
        <label>1</label>
        <note>structural; for NS3 protease activity and NS2/3 auto-cleavage activity</note>
    </ligand>
</feature>
<feature type="binding site" evidence="18">
    <location>
        <position position="1125"/>
    </location>
    <ligand>
        <name>Zn(2+)</name>
        <dbReference type="ChEBI" id="CHEBI:29105"/>
        <label>1</label>
        <note>structural; for NS3 protease activity and NS2/3 auto-cleavage activity</note>
    </ligand>
</feature>
<feature type="binding site" evidence="18">
    <location>
        <position position="1171"/>
    </location>
    <ligand>
        <name>Zn(2+)</name>
        <dbReference type="ChEBI" id="CHEBI:29105"/>
        <label>1</label>
        <note>structural; for NS3 protease activity and NS2/3 auto-cleavage activity</note>
    </ligand>
</feature>
<feature type="binding site" evidence="18">
    <location>
        <position position="1175"/>
    </location>
    <ligand>
        <name>Zn(2+)</name>
        <dbReference type="ChEBI" id="CHEBI:29105"/>
        <label>1</label>
        <note>structural; for NS3 protease activity and NS2/3 auto-cleavage activity</note>
    </ligand>
</feature>
<feature type="binding site" evidence="16">
    <location>
        <begin position="1230"/>
        <end position="1237"/>
    </location>
    <ligand>
        <name>ATP</name>
        <dbReference type="ChEBI" id="CHEBI:30616"/>
    </ligand>
</feature>
<feature type="binding site" evidence="13">
    <location>
        <position position="1237"/>
    </location>
    <ligand>
        <name>Mg(2+)</name>
        <dbReference type="ChEBI" id="CHEBI:18420"/>
        <label>1</label>
        <note>catalytic; for NS3 helicase activity</note>
    </ligand>
</feature>
<feature type="binding site" evidence="13">
    <location>
        <position position="1317"/>
    </location>
    <ligand>
        <name>Mg(2+)</name>
        <dbReference type="ChEBI" id="CHEBI:18420"/>
        <label>1</label>
        <note>catalytic; for NS3 helicase activity</note>
    </ligand>
</feature>
<feature type="binding site" evidence="13">
    <location>
        <position position="2029"/>
    </location>
    <ligand>
        <name>Zn(2+)</name>
        <dbReference type="ChEBI" id="CHEBI:29105"/>
        <label>2</label>
        <note>structural</note>
    </ligand>
</feature>
<feature type="binding site" evidence="13">
    <location>
        <position position="2031"/>
    </location>
    <ligand>
        <name>Zn(2+)</name>
        <dbReference type="ChEBI" id="CHEBI:29105"/>
        <label>2</label>
        <note>structural</note>
    </ligand>
</feature>
<feature type="binding site" evidence="13">
    <location>
        <position position="2052"/>
    </location>
    <ligand>
        <name>Zn(2+)</name>
        <dbReference type="ChEBI" id="CHEBI:29105"/>
        <label>2</label>
        <note>structural</note>
    </ligand>
</feature>
<feature type="binding site" evidence="4">
    <location>
        <position position="2637"/>
    </location>
    <ligand>
        <name>Mg(2+)</name>
        <dbReference type="ChEBI" id="CHEBI:18420"/>
        <label>2</label>
        <note>catalytic; for RNA-directed RNA polymerase activity</note>
    </ligand>
</feature>
<feature type="binding site" evidence="4">
    <location>
        <position position="2735"/>
    </location>
    <ligand>
        <name>Mg(2+)</name>
        <dbReference type="ChEBI" id="CHEBI:18420"/>
        <label>2</label>
        <note>catalytic; for RNA-directed RNA polymerase activity</note>
    </ligand>
</feature>
<feature type="binding site" evidence="4">
    <location>
        <position position="2736"/>
    </location>
    <ligand>
        <name>Mg(2+)</name>
        <dbReference type="ChEBI" id="CHEBI:18420"/>
        <label>2</label>
        <note>catalytic; for RNA-directed RNA polymerase activity</note>
    </ligand>
</feature>
<feature type="site" description="Cleavage; by host signal peptide peptidase" evidence="3">
    <location>
        <begin position="177"/>
        <end position="178"/>
    </location>
</feature>
<feature type="site" description="Cleavage; by host signal peptidase" evidence="3">
    <location>
        <begin position="191"/>
        <end position="192"/>
    </location>
</feature>
<feature type="site" description="Cleavage; by host signal peptidase" evidence="3">
    <location>
        <begin position="383"/>
        <end position="384"/>
    </location>
</feature>
<feature type="site" description="Cleavage; by host signal peptidase">
    <location>
        <begin position="746"/>
        <end position="747"/>
    </location>
</feature>
<feature type="site" description="Cleavage; by host signal peptidase">
    <location>
        <begin position="809"/>
        <end position="810"/>
    </location>
</feature>
<feature type="site" description="Cleavage; by protease NS2" evidence="17">
    <location>
        <begin position="1026"/>
        <end position="1027"/>
    </location>
</feature>
<feature type="site" description="Cleavage; by serine protease NS3" evidence="6">
    <location>
        <begin position="1657"/>
        <end position="1658"/>
    </location>
</feature>
<feature type="site" description="Cleavage; by serine protease NS3" evidence="6">
    <location>
        <begin position="1711"/>
        <end position="1712"/>
    </location>
</feature>
<feature type="site" description="Cleavage; by serine protease NS3" evidence="6">
    <location>
        <begin position="1972"/>
        <end position="1973"/>
    </location>
</feature>
<feature type="site" description="Cleavage; by serine protease NS3" evidence="6">
    <location>
        <begin position="2417"/>
        <end position="2418"/>
    </location>
</feature>
<feature type="modified residue" description="N-acetylserine; by host" evidence="11">
    <location>
        <position position="2"/>
    </location>
</feature>
<feature type="modified residue" description="Phosphoserine; by host" evidence="8">
    <location>
        <position position="53"/>
    </location>
</feature>
<feature type="modified residue" description="Phosphoserine; by host" evidence="8">
    <location>
        <position position="99"/>
    </location>
</feature>
<feature type="modified residue" description="Phosphoserine; by host" evidence="8">
    <location>
        <position position="116"/>
    </location>
</feature>
<feature type="modified residue" description="Phosphoserine; by host" evidence="13">
    <location>
        <position position="2194"/>
    </location>
</feature>
<feature type="modified residue" description="Phosphoserine; by host" evidence="13">
    <location>
        <position position="2197"/>
    </location>
</feature>
<feature type="modified residue" description="Phosphoserine; by host" evidence="13">
    <location>
        <position position="2201"/>
    </location>
</feature>
<feature type="modified residue" description="Phosphoserine; by host" evidence="13">
    <location>
        <position position="2204"/>
    </location>
</feature>
<feature type="modified residue" description="Phosphoserine; by host" evidence="12">
    <location>
        <position position="2207"/>
    </location>
</feature>
<feature type="modified residue" description="Phosphoserine; by host" evidence="3">
    <location>
        <position position="2446"/>
    </location>
</feature>
<feature type="lipid moiety-binding region" description="S-palmitoyl cysteine; by host" evidence="6">
    <location>
        <position position="922"/>
    </location>
</feature>
<feature type="lipid moiety-binding region" description="S-palmitoyl cysteine; by host" evidence="6">
    <location>
        <position position="1972"/>
    </location>
</feature>
<feature type="glycosylation site" description="N-linked (GlcNAc...) asparagine; by host" evidence="6">
    <location>
        <position position="196"/>
    </location>
</feature>
<feature type="glycosylation site" description="N-linked (GlcNAc...) asparagine; by host" evidence="6">
    <location>
        <position position="209"/>
    </location>
</feature>
<feature type="glycosylation site" description="N-linked (GlcNAc...) asparagine; by host" evidence="6">
    <location>
        <position position="234"/>
    </location>
</feature>
<feature type="glycosylation site" description="N-linked (GlcNAc...) asparagine; by host" evidence="6">
    <location>
        <position position="305"/>
    </location>
</feature>
<feature type="glycosylation site" description="N-linked (GlcNAc...) (high mannose) asparagine; by host" evidence="6">
    <location>
        <position position="417"/>
    </location>
</feature>
<feature type="glycosylation site" description="N-linked (GlcNAc...) (high mannose) asparagine; by host" evidence="6">
    <location>
        <position position="423"/>
    </location>
</feature>
<feature type="glycosylation site" description="N-linked (GlcNAc...) (high mannose) asparagine; by host" evidence="6">
    <location>
        <position position="430"/>
    </location>
</feature>
<feature type="glycosylation site" description="N-linked (GlcNAc...) asparagine; by host" evidence="14">
    <location>
        <position position="448"/>
    </location>
</feature>
<feature type="glycosylation site" description="N-linked (GlcNAc...) asparagine; by host" evidence="14">
    <location>
        <position position="476"/>
    </location>
</feature>
<feature type="glycosylation site" description="N-linked (GlcNAc...) asparagine; by host" evidence="14">
    <location>
        <position position="533"/>
    </location>
</feature>
<feature type="glycosylation site" description="N-linked (GlcNAc...) asparagine; by host" evidence="14">
    <location>
        <position position="557"/>
    </location>
</feature>
<feature type="glycosylation site" description="N-linked (GlcNAc...) (high mannose) asparagine; by host" evidence="6">
    <location>
        <position position="623"/>
    </location>
</feature>
<feature type="glycosylation site" description="N-linked (GlcNAc...) (high mannose) asparagine; by host" evidence="6">
    <location>
        <position position="645"/>
    </location>
</feature>
<feature type="disulfide bond" evidence="6">
    <location>
        <begin position="429"/>
        <end position="553"/>
    </location>
</feature>
<feature type="disulfide bond" evidence="6">
    <location>
        <begin position="452"/>
        <end position="459"/>
    </location>
</feature>
<feature type="disulfide bond" evidence="6">
    <location>
        <begin position="487"/>
        <end position="495"/>
    </location>
</feature>
<feature type="disulfide bond" evidence="6">
    <location>
        <begin position="504"/>
        <end position="509"/>
    </location>
</feature>
<feature type="disulfide bond" evidence="6">
    <location>
        <begin position="565"/>
        <end position="570"/>
    </location>
</feature>
<feature type="disulfide bond" evidence="6">
    <location>
        <begin position="581"/>
        <end position="585"/>
    </location>
</feature>
<feature type="disulfide bond" evidence="6">
    <location>
        <begin position="597"/>
        <end position="620"/>
    </location>
</feature>
<feature type="disulfide bond" evidence="6">
    <location>
        <begin position="607"/>
        <end position="644"/>
    </location>
</feature>
<feature type="disulfide bond" evidence="6">
    <location>
        <begin position="652"/>
        <end position="677"/>
    </location>
</feature>
<feature type="cross-link" description="Glycyl lysine isopeptide (Lys-Gly) (interchain with G-Cter in ubiquitin)" evidence="6">
    <location>
        <position position="2347"/>
    </location>
</feature>
<feature type="strand" evidence="21">
    <location>
        <begin position="1058"/>
        <end position="1063"/>
    </location>
</feature>
<feature type="strand" evidence="21">
    <location>
        <begin position="1068"/>
        <end position="1074"/>
    </location>
</feature>
<feature type="strand" evidence="21">
    <location>
        <begin position="1077"/>
        <end position="1081"/>
    </location>
</feature>
<feature type="helix" evidence="21">
    <location>
        <begin position="1082"/>
        <end position="1085"/>
    </location>
</feature>
<feature type="strand" evidence="21">
    <location>
        <begin position="1100"/>
        <end position="1103"/>
    </location>
</feature>
<feature type="turn" evidence="21">
    <location>
        <begin position="1104"/>
        <end position="1107"/>
    </location>
</feature>
<feature type="strand" evidence="21">
    <location>
        <begin position="1108"/>
        <end position="1112"/>
    </location>
</feature>
<feature type="strand" evidence="21">
    <location>
        <begin position="1128"/>
        <end position="1133"/>
    </location>
</feature>
<feature type="strand" evidence="21">
    <location>
        <begin position="1139"/>
        <end position="1144"/>
    </location>
</feature>
<feature type="strand" evidence="21">
    <location>
        <begin position="1146"/>
        <end position="1157"/>
    </location>
</feature>
<feature type="helix" evidence="21">
    <location>
        <begin position="1158"/>
        <end position="1161"/>
    </location>
</feature>
<feature type="strand" evidence="21">
    <location>
        <begin position="1168"/>
        <end position="1170"/>
    </location>
</feature>
<feature type="strand" evidence="21">
    <location>
        <begin position="1176"/>
        <end position="1186"/>
    </location>
</feature>
<feature type="strand" evidence="21">
    <location>
        <begin position="1189"/>
        <end position="1197"/>
    </location>
</feature>
<feature type="helix" evidence="21">
    <location>
        <begin position="1198"/>
        <end position="1200"/>
    </location>
</feature>
<feature type="strand" evidence="21">
    <location>
        <begin position="1679"/>
        <end position="1687"/>
    </location>
</feature>
<reference key="1">
    <citation type="journal article" date="1997" name="J. Gen. Virol.">
        <title>Complete nucleotide sequence of a type 4 hepatitis C virus variant, the predominant genotype in the Middle East.</title>
        <authorList>
            <person name="Chamberlain R.W."/>
            <person name="Adams N."/>
            <person name="Saeed A.A."/>
            <person name="Simmonds P."/>
            <person name="Elliott R.M."/>
        </authorList>
    </citation>
    <scope>NUCLEOTIDE SEQUENCE [GENOMIC RNA]</scope>
</reference>
<reference key="2">
    <citation type="journal article" date="2000" name="J. Viral Hepat.">
        <title>Properties of the hepatitis C virus core protein: a structural protein that modulates cellular processes.</title>
        <authorList>
            <person name="McLauchlan J."/>
        </authorList>
    </citation>
    <scope>REVIEW</scope>
</reference>
<reference key="3">
    <citation type="journal article" date="2004" name="Hepatology">
        <title>Structural biology of hepatitis C virus.</title>
        <authorList>
            <person name="Penin F."/>
            <person name="Dubuisson J."/>
            <person name="Rey F.A."/>
            <person name="Moradpour D."/>
            <person name="Pawlotsky J.-M."/>
        </authorList>
    </citation>
    <scope>REVIEW</scope>
</reference>
<accession>O39929</accession>
<sequence>MSTNPKPQRKTKRNTNRRPMDVKFPGGGQIVGGVYLLPRRGPRLGVRATRKTSERSQPRGRRQPIPKARRPEGRSWAQPGYPWPLYGNEGCGWAGWLLSPRGSRPSWGPNDPRGRSRNLGKVIDTLTCGFADLMGYIPLVGAPVGSVARALAHGVRALEDGINYATGNLPGCSFSIFLLALLSCLTVPASAVNYRNVSGIYHVTNDCPNSSIVYEADHHIMHLPGCVPCVREGNQSRCWVALTPTVAAPYIGAPLESLRSHVDLMVGAATVCSGLYIGDLCGGLFLVGQMFSFRPRRHWTTQDCNCSIYTGHITGHRMAWDMMMNWSPTTTLVLAQVMRIPTTLVDLLSGGHWGVLVGVAYFSMQANWAKVILVLFLFAGVDAETHVSGAAVGRSTAGLANLFSSGSKQNLQLINSNGSWHINRTALNCNDSLNTGFLASLFYTHKFNSSGCSERLACCKSLDSYGQGWGPLGVANISGSSDDRPYCWHYAPRPCGIVPASSVCGPVYCFTPSPVVVGTTDHVGVPTYTWGENETDVFLLNSTRPPHGAWFGCVWMNSTGFTKTCGAPPCEVNTNNGTWHCPTDCFRKHPETTYAKCGSGPWITPRCLIDYPYRLWHFPCTANFSVFNIRTFVGGIEHRMQAACNWTRGEVCGLEHRDRVELSPLLLTTTAWQILPCSFTTLPALSTGLIHLHQNIVDVQYLYGVGSAVVSWALKWEYVVLAFLLLADARVSAYLWMMFMVSQVEAALSNLININAASAAGAQGFWYAILFICIVWHVKGRFPAAAAYAACGLWPCFLLLLMLPERAYAYDQEVAGSLGGAIVVMLTILTLSPHYKLWLARGLWWIQYFIARTEAVLHVYIPSFNVRGPRDSVIVLAVLVCPDLVFDITKYLLAILGPLHILQASLLRIPYFVRAQALVKICSLLRGVVYGKYFQMVVLKSRGLTGTYIYDHLTPMSDWPPYGLRDLAVALEPVVFTPMEKKVIVWGADTAACGDIIRGLPVSARLGNEILLGPADTETSKGWRLLAPITAYAQQTRGLFSTIVTSLTGRDTNENCGEVQVLSTATQSFLGTAVNGVMWTVYHGAGAKTISGPKGPVNQMYTNVDQDLVGWPAPPGVRSLAPCTCGSADLYLVTRHADVIPVRRRGDTRGALLSPRPISILKGSSGGPLLCPMGHRAGIFRAAVCTRGVAKAVDFVPVESLETTMRSPVFTDNSTPPAVPQTYQVAHLHAPTGSGKSTKVPAAHAAQGYKVLVLNPSVAATLGFGVYMSKAYGIDPNIRSGVRTITTGAPITYSTYGKFLADGGCSGGAYDIIICDECYSTDSTTILGIGTVLDQAETAGVRLTVLATATPPGSVTTPHSNIEEVALPTTGEIPFYGKAIPLELIKGGRHLIFCHSKKKCDELARQLTSLGLNAVAYYRGLDVSVIPTSGDVVVCATDALMTGFTGDFDSVIDCNTSVIQTVDFSLDPTFSIEITTVPQDAVSRSQRRGRTGRGRLGTYRYVTPGERPSGMFDTAELCECYDAGCAWYELTPAETTTRLKAYFDTPGLPVCQDHLEFWESVFTGLTHIDGHFLSQTKQSGENFPYLVAYQATVSAKVWLAPPSWDTMWKCLIRLKPTLHGPTPLLYRLGSVQNEVVLTHPITKYIMACMSADLEVVTSTWVLVGGVLAALAAYCLSVGSVVIVGRVVLSGQPAVIPDREVLYQQFDEMEECSKHLPLVEHGLQLAEQFKQKALGLLNFAGKQAQEATPVIQSNFAKLEQFWANDMWNFISGIQYLAGLSTLPGNPAIASLMSFTAAVTSPLTTQQTLLFNILGGWVASQIRDSDASTAFVVSGLAGAAVGSVGLGKILVDILPGYGAGVRGAVVTFKIMSGEMPSTEDLVNLLPAILSPGALVVEVVCPAILRRHVGPGEGAVQWMNRLIAFASRGNHVSPTHYVPESDAARRVTTILSSLTVTSLLRRLHKWINEDCSTPCAESWLWEVWDWVLHVLSDFKTCLKAKFVPLMPGIPLLSWPRGYKGEWRGDGVMHTTCPCGADLAGHIKNGSMRITGPKTCSNTWHGTFPINAYTTGPGVPIPAPNYKFALWRVSAEDYVEVRRVGDFHYVTGVTQDNIKFPCQVPAPELFTEVDGIRIHRHAPKCKPLLRDEVSFSVGLNSFVVGSQLPCEPEPDVAVLTSMLTDPSHITAESARRRLARGSRPSLASSSASQLSPRLLQATCTAPHDSPGTDLLEANLLWGSTATRVETDEKVIILDSFESCVAEQNDDREVSVAAEILRPTKKFPPALPIWARPDYNPPLTETWKQQDYQAPTVHGCALPPAKQPPVPSPRRKRTVQLTESVVSTALAELAAKTFGQSEPSSDRDTDLTTPTETTDSGPIVVDDASDDGSYSSMPPLEGEPGDPDLTSDSWSTVSGSEDVVCCSMSYSWTGALVTPCAAEESKLPISPLSNSLLRHHNMVYATTTRSAVTRQKKVTFDRLQVVDSTYNEVLKEIKARASRVKPRLLTTEEACDLTPPHSARSKFGYGKKDVRSHSRKAINHISSVWKDLLDDNNTPIPTTIMAKNEVFAVNPAKGGRKPARLIVYPDLGSRVCEKRALHDVIKKTALAVMGAAYGFQYSPAQRVEFLLTAWKSKNDPMGFSYDTRCFDSTVTEKDIRVEEEVYQCCDLEPEARKVITALTDRLYVGGPMHNSKGDLCGYRRCRATGVYTTSFGNTLTCYLKATAAIRAAALRDCTMLVCGDDLVVIAESDGVEEDNRALRAFTEAMTRYSAPPGDAPQPAYDLELITSCSSNVSVAHDVTGKKVYYLTRDPETPLARAVWETVRHTPVNSWLGNIIVYAPTIWVRMILMTHFFSILQSQEALEKALDFDMYGVTYSITPLDLPAIIQRLHGLSAFTLHGYSPHELNRVAGALRKLGVPPLRAWRHRARAVRAKLIAQGGRAKICGIYLFNWAVKTKLKLTPLPAAAKLDLSGWFTVGAGGGDIYHSMSHARPRYLLLCLLILTVGVGIFLLPAR</sequence>
<proteinExistence type="evidence at protein level"/>
<comment type="function">
    <molecule>Mature core protein</molecule>
    <text evidence="3 5 6 7 12 20">Packages viral RNA to form a viral nucleocapsid, and promotes virion budding (Probable). Participates in the viral particle production as a result of its interaction with the non-structural protein 5A (By similarity). Binds RNA and may function as a RNA chaperone to induce the RNA structural rearrangements taking place during virus replication (By similarity). Modulates viral translation initiation by interacting with viral IRES and 40S ribosomal subunit (By similarity). Affects various cell signaling pathways, host immunity and lipid metabolism (Probable). Prevents the establishment of cellular antiviral state by blocking the interferon-alpha/beta (IFN-alpha/beta) and IFN-gamma signaling pathways and by blocking the formation of phosphorylated STAT1 and promoting ubiquitin-mediated proteasome-dependent degradation of STAT1 (By similarity). Activates STAT3 leading to cellular transformation (By similarity). Regulates the activity of cellular genes, including c-myc and c-fos (By similarity). May repress the promoter of p53, and sequester CREB3 and SP110 isoform 3/Sp110b in the cytoplasm (By similarity). Represses cell cycle negative regulating factor CDKN1A, thereby interrupting an important check point of normal cell cycle regulation (By similarity). Targets transcription factors involved in the regulation of inflammatory responses and in the immune response: suppresses TNF-induced NF-kappa-B activation, and activates AP-1 (By similarity). Binds to dendritic cells (DCs) via C1QR1, resulting in down-regulation of T-lymphocytes proliferation (By similarity). Alters lipid metabolism by interacting with hepatocellular proteins involved in lipid accumulation and storage (By similarity). Induces up-regulation of FAS promoter activity, and thereby contributes to the increased triglyceride accumulation in hepatocytes (steatosis) (By similarity).</text>
</comment>
<comment type="function">
    <molecule>Envelope glycoprotein E1</molecule>
    <text evidence="6">Forms a heterodimer with envelope glycoprotein E2, which mediates virus attachment to the host cell, virion internalization through clathrin-dependent endocytosis and fusion with host membrane (By similarity). Fusion with the host cell is most likely mediated by both E1 and E2, through conformational rearrangements of the heterodimer required for fusion rather than a classical class II fusion mechanism (By similarity). E1/E2 heterodimer binds host apolipoproteins such as APOB and ApoE thereby forming a lipo-viro-particle (LVP) (By similarity). APOE associated to the LVP allows the initial virus attachment to cell surface receptors such as the heparan sulfate proteoglycans (HSPGs), syndecan-1 (SDC1), syndecan-1 (SDC2), the low-density lipoprotein receptor (LDLR) and scavenger receptor class B type I (SCARB1) (By similarity). The cholesterol transfer activity of SCARB1 allows E2 exposure and binding of E2 to SCARB1 and the tetraspanin CD81 (By similarity). E1/E2 heterodimer binding on CD81 activates the epithelial growth factor receptor (EGFR) signaling pathway (By similarity). Diffusion of the complex E1-E2-EGFR-SCARB1-CD81 to the cell lateral membrane allows further interaction with Claudin 1 (CLDN1) and occludin (OCLN) to finally trigger HCV entry (By similarity).</text>
</comment>
<comment type="function">
    <molecule>Envelope glycoprotein E2</molecule>
    <text evidence="5 6">Forms a heterodimer with envelope glycoprotein E1, which mediates virus attachment to the host cell, virion internalization through clathrin-dependent endocytosis and fusion with host membrane (By similarity). Fusion with the host cell is most likely mediated by both E1 and E2, through conformational rearrangements of the heterodimer required for fusion rather than a classical class II fusion mechanism (By similarity). The interaction between envelope glycoprotein E2 and host apolipoprotein E/APOE allows the proper assembly, maturation and infectivity of the viral particles (By similarity). This interaction is probably promoted via the up-regulation of cellular autophagy by the virus (By similarity). E1/E2 heterodimer binds host apolipoproteins such as APOB and APOE thereby forming a lipo-viro-particle (LVP) (By similarity). APOE associated to the LVP allows the initial virus attachment to cell surface receptors such as the heparan sulfate proteoglycans (HSPGs), syndecan-1 (SDC1), syndecan-1 (SDC2), the low-density lipoprotein receptor (LDLR) and scavenger receptor class B type I (SCARB1) (By similarity). The cholesterol transfer activity of SCARB1 allows E2 exposure and binding of E2 to SCARB1 and the tetraspanin CD81 (By similarity). E1/E2 heterodimer binding on CD81 activates the epithelial growth factor receptor (EGFR) signaling pathway (By similarity). Diffusion of the complex E1-E2-EGFR-SCARB1-CD81 to the cell lateral membrane allows further interaction with Claudin 1 (CLDN1) and occludin (OCLN) to finally trigger HCV entry (By similarity). Inhibits host EIF2AK2/PKR activation, preventing the establishment of an antiviral state (By similarity). Viral ligand for CD209/DC-SIGN and CLEC4M/DC-SIGNR, which are respectively found on dendritic cells (DCs), and on liver sinusoidal endothelial cells and macrophage-like cells of lymph node sinuses (By similarity). These interactions allow the capture of circulating HCV particles by these cells and subsequent facilitated transmission to permissive cells such as hepatocytes and lymphocyte subpopulations (By similarity). The interaction between E2 and host amino acid transporter complex formed by SLC3A2 and SLC7A5/LAT1 may facilitate viral entry into host cell (By similarity).</text>
</comment>
<comment type="function">
    <molecule>Viroporin p7</molecule>
    <text evidence="6 12 20">Ion channel protein that acts as a viroporin and plays an essential role in the assembly, envelopment and secretion of viral particles (By similarity). Regulates the host cell secretory pathway, which induces the intracellular retention of viral glycoproteins and favors assembly of viral particles (By similarity). Creates a pore in acidic organelles and releases Ca(2+) and H(+) in the cytoplasm of infected cells, leading to a productive viral infection (By similarity). High levels of cytoplasmic Ca(2+) may trigger membrane trafficking and transport of viral ER-associated proteins to viroplasms, sites of viral genome replication (Probable). This ionic imbalance induces the assembly of the inflammasome complex, which triggers the maturation of pro-IL-1beta into IL-1beta through the action of caspase-1 (By similarity). Targets also host mitochondria and induces mitochondrial depolarization (By similarity). In addition of its role as a viroporin, acts as a lipid raft adhesion factor (By similarity).</text>
</comment>
<comment type="function">
    <molecule>Protease NS2</molecule>
    <text evidence="4 6">Cysteine protease required for the proteolytic auto-cleavage between the non-structural proteins NS2 and NS3 (By similarity). The N-terminus of NS3 is required for the function of NS2 protease (active region NS2-3) (By similarity). Promotes the initiation of viral particle assembly by mediating the interaction between structural and non-structural proteins (By similarity).</text>
</comment>
<comment type="function">
    <molecule>Serine protease/helicase NS3</molecule>
    <text evidence="6 13">Displays three enzymatic activities: serine protease with a chymotrypsin-like fold, NTPase and RNA helicase (By similarity). NS3 serine protease, in association with NS4A, is responsible for the cleavages of NS3-NS4A, NS4A-NS4B, NS4B-NS5A and NS5A-NS5B (By similarity). The NS3/NS4A complex prevents phosphorylation of host IRF3, thus preventing the establishment of dsRNA induced antiviral state (By similarity). The NS3/NS4A complex induces host amino acid transporter component SLC3A2, thus contributing to HCV propagation (By similarity). NS3 RNA helicase binds to RNA and unwinds both dsDNA and dsRNA in the 3' to 5' direction, and likely resolves RNA complicated stable secondary structures in the template strand (By similarity). Binds a single ATP and catalyzes the unzipping of a single base pair of dsRNA (By similarity). Inhibits host antiviral proteins TBK1 and IRF3 thereby preventing the establishment of an antiviral state (By similarity). Cleaves host MAVS/CARDIF thereby preventing the establishment of an antiviral state (By similarity). Cleaves host TICAM1/TRIF, thereby disrupting TLR3 signaling and preventing the establishment of an antiviral state (By similarity).</text>
</comment>
<comment type="function">
    <molecule>Non-structural protein 4B</molecule>
    <text evidence="6">Induces a specific membrane alteration that serves as a scaffold for the virus replication complex (By similarity). This membrane alteration gives rise to the so-called ER-derived membranous web that contains the replication complex (By similarity). NS4B self-interaction contributes to its function in membranous web formation (By similarity). Promotes host TRIF protein degradation in a CASP8-dependent manner thereby inhibiting host TLR3-mediated interferon signaling (By similarity). Disrupts the interaction between STING and TBK1 contributing to the inhibition of interferon signaling (By similarity).</text>
</comment>
<comment type="function">
    <molecule>Non-structural protein 5A</molecule>
    <text evidence="3 5 6 12 13">Phosphorylated protein that is indispensable for viral replication and assembly (By similarity). Both hypo- and hyperphosphorylated states are required for the viral life cycle (By similarity). The hyperphosphorylated form of NS5A is an inhibitor of viral replication (By similarity). Involved in RNA-binding and especially in binding to the viral genome (By similarity). Zinc is essential for RNA-binding (By similarity). Participates in the viral particle production as a result of its interaction with the mature viral core protein (By similarity). Its interaction with host VAPB may target the viral replication complex to vesicles (By similarity). Down-regulates viral IRES translation initiation (By similarity). Mediates interferon resistance, presumably by interacting with and inhibiting host EIF2AK2/PKR (By similarity). Prevents BIN1-induced apoptosis (By similarity). Acts as a transcriptional activator of some host genes important for viral replication when localized in the nucleus (By similarity). Via the interaction with host PACSIN2, modulates lipid droplet formation in order to promote virion assembly (By similarity). Modulates TNFRSF21/DR6 signaling pathway for viral propagation (By similarity).</text>
</comment>
<comment type="function">
    <molecule>RNA-directed RNA polymerase</molecule>
    <text evidence="6">RNA-dependent RNA polymerase that performs primer-template recognition and RNA synthesis during viral replication. Initiates RNA transcription/replication at a flavin adenine dinucleotide (FAD), resulting in a 5'- FAD cap on viral RNAs. In this way, recognition of viral 5' RNA by host pattern recognition receptors can be bypassed, thereby evading activation of antiviral pathways.</text>
</comment>
<comment type="catalytic activity">
    <molecule>Serine protease/helicase NS3</molecule>
    <reaction evidence="6">
        <text>Hydrolysis of four peptide bonds in the viral precursor polyprotein, commonly with Asp or Glu in the P6 position, Cys or Thr in P1 and Ser or Ala in P1'.</text>
        <dbReference type="EC" id="3.4.21.98"/>
    </reaction>
</comment>
<comment type="catalytic activity">
    <molecule>Serine protease/helicase NS3</molecule>
    <reaction evidence="6">
        <text>a ribonucleoside 5'-triphosphate + H2O = a ribonucleoside 5'-diphosphate + phosphate + H(+)</text>
        <dbReference type="Rhea" id="RHEA:23680"/>
        <dbReference type="ChEBI" id="CHEBI:15377"/>
        <dbReference type="ChEBI" id="CHEBI:15378"/>
        <dbReference type="ChEBI" id="CHEBI:43474"/>
        <dbReference type="ChEBI" id="CHEBI:57930"/>
        <dbReference type="ChEBI" id="CHEBI:61557"/>
        <dbReference type="EC" id="3.6.1.15"/>
    </reaction>
</comment>
<comment type="catalytic activity">
    <molecule>Serine protease/helicase NS3</molecule>
    <reaction evidence="6">
        <text>ATP + H2O = ADP + phosphate + H(+)</text>
        <dbReference type="Rhea" id="RHEA:13065"/>
        <dbReference type="ChEBI" id="CHEBI:15377"/>
        <dbReference type="ChEBI" id="CHEBI:15378"/>
        <dbReference type="ChEBI" id="CHEBI:30616"/>
        <dbReference type="ChEBI" id="CHEBI:43474"/>
        <dbReference type="ChEBI" id="CHEBI:456216"/>
        <dbReference type="EC" id="3.6.4.13"/>
    </reaction>
</comment>
<comment type="catalytic activity">
    <molecule>RNA-directed RNA polymerase</molecule>
    <reaction evidence="15">
        <text>RNA(n) + a ribonucleoside 5'-triphosphate = RNA(n+1) + diphosphate</text>
        <dbReference type="Rhea" id="RHEA:21248"/>
        <dbReference type="Rhea" id="RHEA-COMP:14527"/>
        <dbReference type="Rhea" id="RHEA-COMP:17342"/>
        <dbReference type="ChEBI" id="CHEBI:33019"/>
        <dbReference type="ChEBI" id="CHEBI:61557"/>
        <dbReference type="ChEBI" id="CHEBI:140395"/>
        <dbReference type="EC" id="2.7.7.48"/>
    </reaction>
</comment>
<comment type="cofactor">
    <molecule>Protease NS2</molecule>
    <cofactor evidence="4">
        <name>Zn(2+)</name>
        <dbReference type="ChEBI" id="CHEBI:29105"/>
    </cofactor>
    <text evidence="4">Activity of protease NS2 is dependent on zinc ions and completely inhibited by EDTA. This is probably due to the fact that NS2 protease activity needs NS3 N-terminus that binds a zinc atom (active region NS2-3).</text>
</comment>
<comment type="cofactor">
    <molecule>Serine protease/helicase NS3</molecule>
    <cofactor evidence="4">
        <name>Zn(2+)</name>
        <dbReference type="ChEBI" id="CHEBI:29105"/>
    </cofactor>
    <cofactor evidence="13">
        <name>Mg(2+)</name>
        <dbReference type="ChEBI" id="CHEBI:18420"/>
    </cofactor>
    <text evidence="4 13">Binds 1 zinc ion, which has a structural role (By similarity). The magnesium ion is essential for the helicase activity (By similarity).</text>
</comment>
<comment type="cofactor">
    <molecule>RNA-directed RNA polymerase</molecule>
    <cofactor evidence="4">
        <name>Mg(2+)</name>
        <dbReference type="ChEBI" id="CHEBI:18420"/>
    </cofactor>
    <text evidence="4">Binds 2 magnesium ion that constitute a dinuclear catalytic metal center.</text>
</comment>
<comment type="activity regulation">
    <molecule>Viroporin p7</molecule>
    <text evidence="3 6">Inhibited by the antiviral drug hexamethylene amiloride (By similarity). Inhibition by amantadine appears to be genotype-dependent (By similarity). Also inhibited by long-alkyl-chain iminosugar derivatives (By similarity).</text>
</comment>
<comment type="activity regulation">
    <molecule>RNA-directed RNA polymerase</molecule>
    <text evidence="6">Activity is up-regulated by PRK2/PKN2-mediated phosphorylation.</text>
</comment>
<comment type="subunit">
    <molecule>Mature core protein</molecule>
    <text evidence="3 5 6 7 9 10 12">Homooligomer (By similarity). Interacts with E1 (via C-terminus) (By similarity). Interacts with the non-structural protein 5A (By similarity). Interacts (via N-terminus) with host STAT1 (via SH2 domain); this interaction results in decreased STAT1 phosphorylation and ubiquitin-mediated proteasome-dependent STAT1 degradation, leading to decreased IFN-stimulated gene transcription (By similarity). Interacts with host STAT3; this interaction constitutively activates STAT3 (By similarity). Interacts with host LTBR receptor (By similarity). Interacts with host TNFRSF1A receptor and possibly induces apoptosis (By similarity). Interacts with host HNRPK (By similarity). Interacts with host YWHAE (By similarity). Interacts with host UBE3A/E6AP (By similarity). Interacts with host DDX3X (By similarity). Interacts with host APOA2 (By similarity). Interacts with host RXRA protein (By similarity). Interacts with host SP110 isoform 3/Sp110b; this interaction sequesters the transcriptional corepressor SP110 away from the nucleus (By similarity). Interacts with host CREB3 nuclear transcription protein; this interaction triggers cell transformation (By similarity). Interacts with host ACY3 (By similarity). Interacts with host C1QR1 (By similarity). Interacts with host RBM24; this interaction, which enhances the interaction of the mature core protein with 5'-UTR, may inhibit viral translation and favor replication (By similarity). Interacts with host EIF2AK2/PKR; this interaction induces the autophosphorylation of EIF2AK2 (By similarity). Part of the viral assembly initiation complex composed of NS2, E1, E2, NS3, NS4A, NS5A and the mature core protein (By similarity).</text>
</comment>
<comment type="subunit">
    <molecule>Envelope glycoprotein E1</molecule>
    <text evidence="6 12">Forms a heterodimer with envelope glycoprotein E2 (By similarity). Interacts with mature core protein (By similarity). Interacts with protease NS2 (By similarity). The heterodimer E1/E2 interacts with host CLDN1; this interaction plays a role in viral entry into host cell (By similarity). Interacts with host SPSB2 (via C-terminus) (By similarity). Part of the viral assembly initiation complex composed of NS2, E1, E2, NS3, NS4A, NS5A and the mature core protein (By similarity). Interacts with host NEURL3; this interaction prevents E1 binding to glycoprotein E2 (By similarity).</text>
</comment>
<comment type="subunit">
    <molecule>Envelope glycoprotein E2</molecule>
    <text evidence="6 12 13">Forms a heterodimer with envelope glycoprotein E1 (By similarity). Interacts with host CD81 and SCARB1 receptors; these interactions play a role in viral entry into host cell (By similarity). Interacts with host EIF2AK2/PKR; this interaction inhibits EIF2AK2 and probably allows the virus to evade the innate immune response (By similarity). Interacts with host CD209/DC-SIGN and CLEC4M/DC-SIGNR (By similarity). Interact with host SPCS1; this interaction is essential for viral particle assembly (By similarity). Interacts with protease NS2 (By similarity). The heterodimer E1/E2 interacts with host CLDN1; this interaction plays a role in viral entry into host cell (By similarity). Part of the viral assembly initiation complex composed of NS2, E1, E2, NS3, NS4A, NS5A and the mature core protein (By similarity). Interacts with host SLC3A2/4F2hc; the interaction may facilitate viral entry into host cell (By similarity). Interacts with human PLSCR1 (By similarity).</text>
</comment>
<comment type="subunit">
    <molecule>Viroporin p7</molecule>
    <text evidence="2 6 12">Homohexamer (By similarity). Homoheptamer (By similarity). Interacts with protease NS2 (By similarity).</text>
</comment>
<comment type="subunit">
    <molecule>Protease NS2</molecule>
    <text evidence="6 12">Homodimer (By similarity). Interacts with host SPCS1; this interaction is essential for viral particle assembly (By similarity). Interacts with envelope glycoprotein E1 (By similarity). Interacts with envelope glycoprotein E2 (By similarity). Interacts with viroporin p7 (By similarity). Interacts with serine protease/helicase NS3 (By similarity). Part of the replication complex composed of NS2, NS3, NS4A, NS4B, NS5A and the RNA-directed RNA polymerase embedded in an ER-derived membranous web (By similarity). Part of the viral assembly initiation complex composed of NS2, E1, E2, NS3, NS4A, NS5A and the mature core protein (By similarity).</text>
</comment>
<comment type="subunit">
    <molecule>Serine protease/helicase NS3</molecule>
    <text evidence="4 6 12 13">Interacts with protease NS2 (By similarity). Interacts with non-structural protein 4A; this interaction stabilizes the folding of NS3 serine protease (By similarity). NS3-NS4A interaction is essential for NS3 activation and allows membrane anchorage of the latter (By similarity). NS3/NS4A complex also prevents phosphorylation of host IRF3, thus preventing the establishment of dsRNA induced antiviral state (By similarity). Interacts with host MAVS; this interaction leads to the cleavage and inhibition of host MAVS (By similarity). Interacts with host TICAM1; this interaction leads to the cleavage and inhibition of host TICAM1 (By similarity). Interacts with host TANK-binding kinase/TBK1; this interaction results in the inhibition of the association between TBK1 and IRF3, which leads to the inhibition of IRF3 activation (By similarity). Interacts with host RBM24 (By similarity). Part of the replication complex composed of NS2, NS3, NS4A, NS4B, NS5A and the RNA-directed RNA polymerase embedded in an ER-derived membranous web (By similarity). Part of the viral assembly initiation complex composed of NS2, E1, E2, NS3, NS4A, NS5A and the mature core protein (By similarity).</text>
</comment>
<comment type="subunit">
    <molecule>Non-structural protein 4A</molecule>
    <text evidence="3 4 6 12">Interacts with NS3 serine protease; this interaction stabilizes the folding of NS3 serine protease (By similarity). NS3-NS4A interaction is essential for NS3 activation and allows membrane anchorage of the latter (By similarity). Interacts with non-structural protein 5A (via N-terminus) (By similarity). Part of the replication complex composed of NS2, NS3, NS4A, NS4B, NS5A and the RNA-directed RNA polymerase embedded in an ER-derived membranous web (By similarity). Part of the viral assembly initiation complex composed of NS2, E1, E2, NS3, NS4A, NS5A and the mature core protein (By similarity).</text>
</comment>
<comment type="subunit">
    <molecule>Non-structural protein 4B</molecule>
    <text evidence="6 12">Homomultimer (By similarity). Interacts with non-structural protein NS5A (By similarity). Interacts with host PLA2G4C; this interaction likely initiates the recruitment of replication complexes to lipid droplets (By similarity). Interacts with host STING; this interaction disrupts the interaction between STING and TBK1 thereby suppressing the interferon signaling (By similarity). Part of the replication complex composed of NS2, NS3, NS4A, NS4B, NS5A and the RNA-directed RNA polymerase embedded in an ER-derived membranous web (By similarity).</text>
</comment>
<comment type="subunit">
    <molecule>Non-structural protein 5A</molecule>
    <text evidence="3 4 5 6 12">Monomer. Homodimer; dimerization is required for RNA-binding (By similarity). Interacts with the mature core protein (By similarity). Interacts (via N-terminus) with non-structural protein 4A (By similarity). Interacts with non-structural protein 4B. Interacts (via region D2) with RNA-directed RNA polymerase (By similarity). Part of the viral assembly initiation complex composed of NS2, E1, E2, NS3, NS4A, NS5A and the mature core protein (By similarity). Part of the replication complex composed of NS2, NS3, NS4A, NS4B, NS5A and the RNA-directed RNA polymerase embedded in an ER-derived membranous web (By similarity). Interacts with host GRB2 (By similarity). Interacts with host BIN1 (By similarity). Interacts with host PIK3R1 (By similarity). Interacts with host SRCAP (By similarity). Interacts with host FKBP8 (By similarity). Interacts (via C-terminus) with host VAPB (via MSP domain). Interacts with host EIF2AK2/PKR; this interaction leads to disruption of EIF2AK2 dimerization by NS5A and probably allows the virus to evade the innate immune response. Interacts (via N-terminus) with host PACSIN2 (via N-terminus); this interaction attenuates protein kinase C alpha-mediated phosphorylation of PACSIN2 by disrupting the interaction between PACSIN2 and PRKCA (By similarity). Interacts (via N-terminus) with host SRC kinase (via SH2 domain) (By similarity). Interacts with most Src-family kinases (By similarity). Interacts with host IFI27 and SKP2; promotes the ubiquitin-mediated proteasomal degradation of NS5A (By similarity). Interacts with host GPS2 (By similarity). Interacts with host TNFRSF21; this interaction allows the modulation by the virus of JNK, p38 MAPK, STAT3, and Akt signaling pathways in a DR6-dependent manner. Interacts (via N-terminus) with host CIDEB (via N-terminus); this interaction seems to regulate the association of HCV particles with APOE (By similarity). Interacts with host CHKA/Choline Kinase-alpha; CHKA bridges host PI4KA and NS5A and potentiates NS5A-stimulated PI4KA activity, which then facilitates the targeting of the ternary complex to the ER for viral replication (By similarity). Interacts with host SPSB2 (via C-terminus); this interaction targets NS5A for ubiquitination and degradation (By similarity). Interacts with host RAB18; this interaction may promote the association of NS5A and other replicase components with lipid droplets (By similarity). Interacts (via region D2) with host PPIA/CYPA; the interaction stimulates RNA-binding ability of NS5A and is dependent on the peptidyl-prolyl cis-trans isomerase activity of PPIA/CYPA. Interacts with host TRIM14; this interaction induces the degradation of NS5A (By similarity).</text>
</comment>
<comment type="subunit">
    <molecule>RNA-directed RNA polymerase</molecule>
    <text evidence="6">Homooligomer (By similarity). Interacts with non-structural protein 5A (By similarity). Interacts with host VAPB (By similarity). Interacts with host PRK2/PKN2 (By similarity). Interacts with host HNRNPA1 and SEPT6; these interactions facilitate viral replication (By similarity). Part of the replication complex composed of NS2, NS3, NS4A, NS4B, NS5A and the RNA-directed RNA polymerase (By similarity).</text>
</comment>
<comment type="subcellular location">
    <molecule>Core protein precursor</molecule>
    <subcellularLocation>
        <location evidence="5">Host endoplasmic reticulum membrane</location>
        <topology evidence="14">Single-pass membrane protein</topology>
    </subcellularLocation>
    <subcellularLocation>
        <location evidence="5">Host mitochondrion membrane</location>
        <topology evidence="14">Single-pass type I membrane protein</topology>
    </subcellularLocation>
    <text>The C-terminal transmembrane domain of the core protein precursor contains an ER signal leading the nascent polyprotein to the ER membrane.</text>
</comment>
<comment type="subcellular location">
    <molecule>Mature core protein</molecule>
    <subcellularLocation>
        <location evidence="12">Virion</location>
    </subcellularLocation>
    <subcellularLocation>
        <location evidence="12">Host cytoplasm</location>
    </subcellularLocation>
    <subcellularLocation>
        <location evidence="3">Host nucleus</location>
    </subcellularLocation>
    <subcellularLocation>
        <location evidence="12">Host lipid droplet</location>
    </subcellularLocation>
    <text evidence="6">Only a minor proportion of core protein is present in the nucleus (By similarity). Probably present on the surface of lipid droplets (By similarity).</text>
</comment>
<comment type="subcellular location">
    <molecule>Envelope glycoprotein E1</molecule>
    <subcellularLocation>
        <location evidence="20">Virion membrane</location>
        <topology evidence="20">Single-pass type I membrane protein</topology>
    </subcellularLocation>
    <subcellularLocation>
        <location>Host endoplasmic reticulum membrane</location>
        <topology evidence="6">Single-pass type I membrane protein</topology>
    </subcellularLocation>
    <text evidence="6">The C-terminal transmembrane domain acts as a signal sequence and forms a hairpin structure before cleavage by host signal peptidase (By similarity). After cleavage, the membrane sequence is retained at the C-terminus of the protein, serving as ER membrane anchor (By similarity). A reorientation of the second hydrophobic stretch occurs after cleavage producing a single reoriented transmembrane domain (By similarity). These events explain the final topology of the protein (By similarity).</text>
</comment>
<comment type="subcellular location">
    <molecule>Envelope glycoprotein E2</molecule>
    <subcellularLocation>
        <location evidence="20">Virion membrane</location>
        <topology evidence="20">Single-pass type I membrane protein</topology>
    </subcellularLocation>
    <subcellularLocation>
        <location>Host endoplasmic reticulum membrane</location>
        <topology evidence="6">Single-pass type I membrane protein</topology>
    </subcellularLocation>
    <subcellularLocation>
        <location evidence="13">Host lipid droplet</location>
    </subcellularLocation>
    <text evidence="6">The C-terminal transmembrane domain acts as a signal sequence and forms a hairpin structure before cleavage by host signal peptidase (By similarity). After cleavage, the membrane sequence is retained at the C-terminus of the protein, serving as ER membrane anchor (By similarity). A reorientation of the second hydrophobic stretch occurs after cleavage producing a single reoriented transmembrane domain (By similarity). These events explain the final topology of the protein (By similarity).</text>
</comment>
<comment type="subcellular location">
    <molecule>Viroporin p7</molecule>
    <subcellularLocation>
        <location evidence="6">Host endoplasmic reticulum membrane</location>
        <topology evidence="6">Multi-pass membrane protein</topology>
    </subcellularLocation>
    <subcellularLocation>
        <location evidence="6">Host mitochondrion</location>
    </subcellularLocation>
    <subcellularLocation>
        <location evidence="6">Host cell membrane</location>
    </subcellularLocation>
    <text evidence="6">The C-terminus of p7 membrane domain acts as a signal sequence (By similarity). After cleavage by host signal peptidase, the membrane sequence is retained at the C-terminus of the protein, serving as ER membrane anchor (By similarity). ER retention of p7 is leaky and a small fraction reaches the plasma membrane (By similarity).</text>
</comment>
<comment type="subcellular location">
    <molecule>Protease NS2</molecule>
    <subcellularLocation>
        <location evidence="6">Host endoplasmic reticulum membrane</location>
        <topology evidence="6">Multi-pass membrane protein</topology>
    </subcellularLocation>
    <subcellularLocation>
        <location evidence="13">Host lipid droplet</location>
    </subcellularLocation>
    <text evidence="12">Probably present on the surface of lipid droplets.</text>
</comment>
<comment type="subcellular location">
    <molecule>Serine protease/helicase NS3</molecule>
    <subcellularLocation>
        <location evidence="20">Host endoplasmic reticulum membrane</location>
        <topology evidence="20">Peripheral membrane protein</topology>
    </subcellularLocation>
    <text evidence="20">NS3 is associated to the ER membrane through its binding to NS4A.</text>
</comment>
<comment type="subcellular location">
    <molecule>Non-structural protein 4A</molecule>
    <subcellularLocation>
        <location evidence="20">Host endoplasmic reticulum membrane</location>
        <topology evidence="20">Single-pass type I membrane protein</topology>
    </subcellularLocation>
    <text>Host membrane insertion occurs after processing by the NS3 protease.</text>
</comment>
<comment type="subcellular location">
    <molecule>Non-structural protein 4B</molecule>
    <subcellularLocation>
        <location evidence="6">Host endoplasmic reticulum membrane</location>
        <topology evidence="6">Multi-pass membrane protein</topology>
    </subcellularLocation>
    <text evidence="6">A reorientation of the N-terminus into the ER lumen occurs post-translationally.</text>
</comment>
<comment type="subcellular location">
    <molecule>Non-structural protein 5A</molecule>
    <subcellularLocation>
        <location evidence="6">Host endoplasmic reticulum membrane</location>
        <topology evidence="6">Peripheral membrane protein</topology>
    </subcellularLocation>
    <subcellularLocation>
        <location evidence="6">Host cytoplasm</location>
        <location evidence="6">Host perinuclear region</location>
    </subcellularLocation>
    <subcellularLocation>
        <location evidence="3">Host mitochondrion</location>
    </subcellularLocation>
    <subcellularLocation>
        <location evidence="6">Host cytoplasm</location>
    </subcellularLocation>
    <subcellularLocation>
        <location evidence="3">Host nucleus</location>
    </subcellularLocation>
    <subcellularLocation>
        <location evidence="13">Host lipid droplet</location>
    </subcellularLocation>
    <text evidence="3 6">Host membrane insertion occurs after processing by the NS3 protease (By similarity). Localizes at the surface of lipid droplets (By similarity).</text>
</comment>
<comment type="subcellular location">
    <molecule>RNA-directed RNA polymerase</molecule>
    <subcellularLocation>
        <location evidence="6">Host cytoplasm</location>
    </subcellularLocation>
    <subcellularLocation>
        <location>Host endoplasmic reticulum membrane</location>
        <topology evidence="6">Single-pass type IV membrane protein</topology>
    </subcellularLocation>
    <text evidence="6">Host membrane insertion occurs after processing by the NS3 protease.</text>
</comment>
<comment type="domain">
    <molecule>Envelope glycoprotein E1</molecule>
    <text evidence="6">The transmembrane regions of envelope E1 and E2 glycoproteins are involved in heterodimer formation, ER localization, and assembly of these proteins.</text>
</comment>
<comment type="domain">
    <molecule>Envelope glycoprotein E2</molecule>
    <text evidence="4 6">The transmembrane regions of envelope E1 and E2 glycoproteins are involved in heterodimer formation, ER localization, and assembly of these proteins (By similarity). Envelope E2 glycoprotein contain two highly variable regions called hypervariable region 1 and 2 (HVR1 and HVR2) (By similarity). E2 also contain two segments involved in CD81-binding (By similarity). HVR1 is implicated in the SCARB1-mediated cell entry and probably acts as a regulator of the association of particles with lipids (By similarity).</text>
</comment>
<comment type="domain">
    <molecule>Protease NS2</molecule>
    <text evidence="4">The N-terminus of NS3 is required for the catalytic activity of protease NS2 (By similarity). The minimal catalytic region includes the C-terminus of NS2 and the N-terminus NS3 protease domain (active region NS2-3) (By similarity).</text>
</comment>
<comment type="domain">
    <molecule>Serine protease/helicase NS3</molecule>
    <text evidence="3 6">The N-terminal one-third contains the protease activity (By similarity). This region contains a zinc atom that does not belong to the active site, but may play a structural rather than a catalytic role (By similarity). This region is essential for the activity of protease NS2, maybe by contributing to the folding of the latter (By similarity). The NTPase/helicase activity is located in the twothirds C-terminus of NS3, this domain contains the NTPase and RNA-binding regions (By similarity).</text>
</comment>
<comment type="domain">
    <molecule>Non-structural protein 4B</molecule>
    <text evidence="12">Contains a glycine zipper region that critically contributes to the biogenesis of functional ER-derived replication organelles.</text>
</comment>
<comment type="domain">
    <molecule>Non-structural protein 5A</molecule>
    <text evidence="3 6">The N-terminus of NS5A acts as membrane anchor (By similarity). The central part of NS5A contains a variable region called interferon sensitivity determining region (ISDR) and seems to be intrinsically disordered and interacts with NS5B and host EIF2AK2 (By similarity). The C-terminus of NS5A contains a variable region called variable region 3 (V3) (By similarity). ISDR and V3 may be involved in sensitivity and/or resistance to IFN-alpha therapy (By similarity). The C-terminus contains a nuclear localization signal (By similarity). The SH3-binding domain is involved in the interaction with host BIN1, GRB2 and Src-family kinases (By similarity).</text>
</comment>
<comment type="PTM">
    <molecule>Genome polyprotein</molecule>
    <text evidence="5 6">Specific enzymatic cleavages in vivo yield mature proteins (By similarity). The structural proteins, core, E1, E2 and p7 are produced by proteolytic processing by host signal peptidases (By similarity). The core protein precursor is synthesized as a 23 kDa, which is retained in the ER membrane through the hydrophobic signal peptide (By similarity). Cleavage by the signal peptidase releases the 21 kDa mature core protein (By similarity). The cleavage of the core protein precursor occurs between aminoacids 176 and 188 but the exact cleavage site is not known (By similarity). Some degraded forms of the core protein appear as well during the course of infection (By similarity). The other proteins (p7, NS2, NS3, NS4A, NS4B, NS5A and NS5B) are cleaved by the viral proteases (By similarity). Autoprocessing between NS2 and NS3 is mediated by the NS2 cysteine protease catalytic domain and regulated by the NS3 N-terminal domain (By similarity).</text>
</comment>
<comment type="PTM">
    <molecule>Mature core protein</molecule>
    <text evidence="8">Phosphorylated by host PKC and PKA.</text>
</comment>
<comment type="PTM">
    <molecule>Mature core protein</molecule>
    <text evidence="9">Ubiquitinated; mediated by UBE3A and leading to core protein subsequent proteasomal degradation.</text>
</comment>
<comment type="PTM">
    <molecule>Envelope glycoprotein E1</molecule>
    <text evidence="6">Highly N-glycosylated.</text>
</comment>
<comment type="PTM">
    <molecule>Envelope glycoprotein E2</molecule>
    <text evidence="6">Highly N-glycosylated.</text>
</comment>
<comment type="PTM">
    <molecule>Protease NS2</molecule>
    <text evidence="6">Palmitoylation is required for NS2/3 autoprocessing and E2 recruitment to membranes.</text>
</comment>
<comment type="PTM">
    <molecule>Non-structural protein 4B</molecule>
    <text evidence="6">Palmitoylated. This modification may play a role in its polymerization or in protein-protein interactions.</text>
</comment>
<comment type="PTM">
    <molecule>Non-structural protein 5A</molecule>
    <text evidence="3 5">Phosphorylated on serines in a basal form termed p56 (By similarity). p58 is a hyperphosphorylated form of p56 (By similarity). p56 and p58 coexist in the cell in roughly equivalent amounts (By similarity). Hyperphosphorylation is dependent on the presence of NS4A (By similarity). Host CSNK1A1/CKI-alpha or RPS6KB1 kinases may be responsible for NS5A phosphorylation (By similarity).</text>
</comment>
<comment type="PTM">
    <molecule>Non-structural protein 5A</molecule>
    <text evidence="12">Tyrosine phosphorylation is essential for the interaction with host SRC.</text>
</comment>
<comment type="PTM">
    <molecule>RNA-directed RNA polymerase</molecule>
    <text evidence="3">The N-terminus is phosphorylated by host PRK2/PKN2.</text>
</comment>
<comment type="miscellaneous">
    <text evidence="20">Viral particle assembly takes place at the surface of ER-derived membranes in close proximity to lipid droplets. NS2 associates with E1/E2 glycoproteins, NS3 and NS5A, which interacts with the viral RNA and core protein to promote genome encapsidation. The nucleocapsid buds at the ER membrane where E1/E2 glycoproteins are anchored and afterward associate with nascent lipid droplet to acquire APOE and APOC. Secretion of viral particles is probably regulated by viroporin p7.</text>
</comment>
<comment type="miscellaneous">
    <molecule>Non-structural protein 5A</molecule>
    <text evidence="20">Cell culture adaptation of the virus leads to mutations in NS5A, reducing its inhibitory effect on replication.</text>
</comment>
<comment type="miscellaneous">
    <molecule>Mature core protein</molecule>
    <text evidence="3">Exerts viral interference on hepatitis B virus when HCV and HBV coinfect the same cell, by suppressing HBV gene expression, RNA encapsidation and budding.</text>
</comment>
<comment type="similarity">
    <text evidence="20">Belongs to the hepacivirus polyprotein family.</text>
</comment>
<comment type="caution">
    <text evidence="20">The core gene probably also codes for alternative reading frame proteins (ARFPs). Many functions depicted for the core protein might belong to the ARFPs.</text>
</comment>
<dbReference type="EC" id="3.4.22.-" evidence="4"/>
<dbReference type="EC" id="3.4.21.98" evidence="6"/>
<dbReference type="EC" id="3.6.1.15" evidence="6"/>
<dbReference type="EC" id="3.6.4.13" evidence="6"/>
<dbReference type="EC" id="2.7.7.48" evidence="6"/>
<dbReference type="EMBL" id="Y11604">
    <property type="protein sequence ID" value="CAA72338.1"/>
    <property type="molecule type" value="Genomic_RNA"/>
</dbReference>
<dbReference type="PIR" id="PQ0804">
    <property type="entry name" value="PQ0804"/>
</dbReference>
<dbReference type="RefSeq" id="YP_001469632.1">
    <property type="nucleotide sequence ID" value="NC_009825.1"/>
</dbReference>
<dbReference type="PDB" id="6P6Z">
    <property type="method" value="X-ray"/>
    <property type="resolution" value="2.29 A"/>
    <property type="chains" value="A=1030-1208, A=1678-1688"/>
</dbReference>
<dbReference type="PDBsum" id="6P6Z"/>
<dbReference type="BMRB" id="O39929"/>
<dbReference type="SMR" id="O39929"/>
<dbReference type="BindingDB" id="O39929"/>
<dbReference type="DrugCentral" id="O39929"/>
<dbReference type="MEROPS" id="C18.001"/>
<dbReference type="MEROPS" id="S29.001"/>
<dbReference type="GeneID" id="11027168"/>
<dbReference type="KEGG" id="vg:11027168"/>
<dbReference type="euHCVdb" id="Y11604"/>
<dbReference type="BRENDA" id="3.4.21.98">
    <property type="organism ID" value="17004"/>
</dbReference>
<dbReference type="Proteomes" id="UP000007415">
    <property type="component" value="Genome"/>
</dbReference>
<dbReference type="GO" id="GO:0044167">
    <property type="term" value="C:host cell endoplasmic reticulum membrane"/>
    <property type="evidence" value="ECO:0007669"/>
    <property type="project" value="UniProtKB-SubCell"/>
</dbReference>
<dbReference type="GO" id="GO:0044186">
    <property type="term" value="C:host cell lipid droplet"/>
    <property type="evidence" value="ECO:0007669"/>
    <property type="project" value="UniProtKB-SubCell"/>
</dbReference>
<dbReference type="GO" id="GO:0044191">
    <property type="term" value="C:host cell mitochondrial membrane"/>
    <property type="evidence" value="ECO:0007669"/>
    <property type="project" value="UniProtKB-SubCell"/>
</dbReference>
<dbReference type="GO" id="GO:0042025">
    <property type="term" value="C:host cell nucleus"/>
    <property type="evidence" value="ECO:0007669"/>
    <property type="project" value="UniProtKB-SubCell"/>
</dbReference>
<dbReference type="GO" id="GO:0044220">
    <property type="term" value="C:host cell perinuclear region of cytoplasm"/>
    <property type="evidence" value="ECO:0007669"/>
    <property type="project" value="UniProtKB-SubCell"/>
</dbReference>
<dbReference type="GO" id="GO:0020002">
    <property type="term" value="C:host cell plasma membrane"/>
    <property type="evidence" value="ECO:0007669"/>
    <property type="project" value="UniProtKB-SubCell"/>
</dbReference>
<dbReference type="GO" id="GO:0016020">
    <property type="term" value="C:membrane"/>
    <property type="evidence" value="ECO:0007669"/>
    <property type="project" value="UniProtKB-KW"/>
</dbReference>
<dbReference type="GO" id="GO:1990904">
    <property type="term" value="C:ribonucleoprotein complex"/>
    <property type="evidence" value="ECO:0007669"/>
    <property type="project" value="UniProtKB-KW"/>
</dbReference>
<dbReference type="GO" id="GO:0019031">
    <property type="term" value="C:viral envelope"/>
    <property type="evidence" value="ECO:0007669"/>
    <property type="project" value="UniProtKB-KW"/>
</dbReference>
<dbReference type="GO" id="GO:0019013">
    <property type="term" value="C:viral nucleocapsid"/>
    <property type="evidence" value="ECO:0007669"/>
    <property type="project" value="UniProtKB-KW"/>
</dbReference>
<dbReference type="GO" id="GO:0055036">
    <property type="term" value="C:virion membrane"/>
    <property type="evidence" value="ECO:0007669"/>
    <property type="project" value="UniProtKB-SubCell"/>
</dbReference>
<dbReference type="GO" id="GO:0005524">
    <property type="term" value="F:ATP binding"/>
    <property type="evidence" value="ECO:0007669"/>
    <property type="project" value="UniProtKB-KW"/>
</dbReference>
<dbReference type="GO" id="GO:0016887">
    <property type="term" value="F:ATP hydrolysis activity"/>
    <property type="evidence" value="ECO:0007669"/>
    <property type="project" value="RHEA"/>
</dbReference>
<dbReference type="GO" id="GO:0015267">
    <property type="term" value="F:channel activity"/>
    <property type="evidence" value="ECO:0007669"/>
    <property type="project" value="UniProtKB-KW"/>
</dbReference>
<dbReference type="GO" id="GO:0004197">
    <property type="term" value="F:cysteine-type endopeptidase activity"/>
    <property type="evidence" value="ECO:0007669"/>
    <property type="project" value="InterPro"/>
</dbReference>
<dbReference type="GO" id="GO:0003723">
    <property type="term" value="F:RNA binding"/>
    <property type="evidence" value="ECO:0007669"/>
    <property type="project" value="UniProtKB-KW"/>
</dbReference>
<dbReference type="GO" id="GO:0003724">
    <property type="term" value="F:RNA helicase activity"/>
    <property type="evidence" value="ECO:0007669"/>
    <property type="project" value="UniProtKB-EC"/>
</dbReference>
<dbReference type="GO" id="GO:0003968">
    <property type="term" value="F:RNA-directed RNA polymerase activity"/>
    <property type="evidence" value="ECO:0007669"/>
    <property type="project" value="UniProtKB-KW"/>
</dbReference>
<dbReference type="GO" id="GO:0004252">
    <property type="term" value="F:serine-type endopeptidase activity"/>
    <property type="evidence" value="ECO:0007669"/>
    <property type="project" value="InterPro"/>
</dbReference>
<dbReference type="GO" id="GO:0017124">
    <property type="term" value="F:SH3 domain binding"/>
    <property type="evidence" value="ECO:0007669"/>
    <property type="project" value="UniProtKB-KW"/>
</dbReference>
<dbReference type="GO" id="GO:0005198">
    <property type="term" value="F:structural molecule activity"/>
    <property type="evidence" value="ECO:0007669"/>
    <property type="project" value="InterPro"/>
</dbReference>
<dbReference type="GO" id="GO:0008270">
    <property type="term" value="F:zinc ion binding"/>
    <property type="evidence" value="ECO:0007669"/>
    <property type="project" value="InterPro"/>
</dbReference>
<dbReference type="GO" id="GO:0075512">
    <property type="term" value="P:clathrin-dependent endocytosis of virus by host cell"/>
    <property type="evidence" value="ECO:0007669"/>
    <property type="project" value="UniProtKB-KW"/>
</dbReference>
<dbReference type="GO" id="GO:0039654">
    <property type="term" value="P:fusion of virus membrane with host endosome membrane"/>
    <property type="evidence" value="ECO:0007669"/>
    <property type="project" value="UniProtKB-KW"/>
</dbReference>
<dbReference type="GO" id="GO:0034220">
    <property type="term" value="P:monoatomic ion transmembrane transport"/>
    <property type="evidence" value="ECO:0007669"/>
    <property type="project" value="UniProtKB-KW"/>
</dbReference>
<dbReference type="GO" id="GO:0006508">
    <property type="term" value="P:proteolysis"/>
    <property type="evidence" value="ECO:0007669"/>
    <property type="project" value="UniProtKB-KW"/>
</dbReference>
<dbReference type="GO" id="GO:0039520">
    <property type="term" value="P:symbiont-mediated activation of host autophagy"/>
    <property type="evidence" value="ECO:0007669"/>
    <property type="project" value="UniProtKB-KW"/>
</dbReference>
<dbReference type="GO" id="GO:0039645">
    <property type="term" value="P:symbiont-mediated perturbation of host cell cycle G1/S transition checkpoint"/>
    <property type="evidence" value="ECO:0007669"/>
    <property type="project" value="UniProtKB-KW"/>
</dbReference>
<dbReference type="GO" id="GO:0039545">
    <property type="term" value="P:symbiont-mediated suppression of host cytoplasmic pattern recognition receptor signaling pathway via inhibition of MAVS activity"/>
    <property type="evidence" value="ECO:0007669"/>
    <property type="project" value="UniProtKB-KW"/>
</dbReference>
<dbReference type="GO" id="GO:0039563">
    <property type="term" value="P:symbiont-mediated suppression of host JAK-STAT cascade via inhibition of STAT1 activity"/>
    <property type="evidence" value="ECO:0007669"/>
    <property type="project" value="UniProtKB-KW"/>
</dbReference>
<dbReference type="GO" id="GO:0039527">
    <property type="term" value="P:symbiont-mediated suppression of host TRAF-mediated signal transduction"/>
    <property type="evidence" value="ECO:0007669"/>
    <property type="project" value="UniProtKB-KW"/>
</dbReference>
<dbReference type="GO" id="GO:0039502">
    <property type="term" value="P:symbiont-mediated suppression of host type I interferon-mediated signaling pathway"/>
    <property type="evidence" value="ECO:0007669"/>
    <property type="project" value="UniProtKB-KW"/>
</dbReference>
<dbReference type="GO" id="GO:0019087">
    <property type="term" value="P:symbiont-mediated transformation of host cell"/>
    <property type="evidence" value="ECO:0007669"/>
    <property type="project" value="InterPro"/>
</dbReference>
<dbReference type="GO" id="GO:0039694">
    <property type="term" value="P:viral RNA genome replication"/>
    <property type="evidence" value="ECO:0007669"/>
    <property type="project" value="InterPro"/>
</dbReference>
<dbReference type="GO" id="GO:0019062">
    <property type="term" value="P:virion attachment to host cell"/>
    <property type="evidence" value="ECO:0007669"/>
    <property type="project" value="UniProtKB-KW"/>
</dbReference>
<dbReference type="CDD" id="cd20903">
    <property type="entry name" value="HCV_p7"/>
    <property type="match status" value="1"/>
</dbReference>
<dbReference type="CDD" id="cd23202">
    <property type="entry name" value="Hepacivirus_RdRp"/>
    <property type="match status" value="1"/>
</dbReference>
<dbReference type="FunFam" id="2.20.25.220:FF:000001">
    <property type="entry name" value="Genome polyprotein"/>
    <property type="match status" value="1"/>
</dbReference>
<dbReference type="FunFam" id="2.40.10.10:FF:000029">
    <property type="entry name" value="Genome polyprotein"/>
    <property type="match status" value="1"/>
</dbReference>
<dbReference type="FunFam" id="3.30.160.890:FF:000001">
    <property type="entry name" value="Genome polyprotein"/>
    <property type="match status" value="1"/>
</dbReference>
<dbReference type="FunFam" id="3.30.70.270:FF:000015">
    <property type="entry name" value="Genome polyprotein"/>
    <property type="match status" value="1"/>
</dbReference>
<dbReference type="FunFam" id="3.40.50.300:FF:000557">
    <property type="entry name" value="Genome polyprotein"/>
    <property type="match status" value="1"/>
</dbReference>
<dbReference type="FunFam" id="3.40.50.300:FF:000717">
    <property type="entry name" value="Genome polyprotein"/>
    <property type="match status" value="1"/>
</dbReference>
<dbReference type="FunFam" id="4.10.710.10:FF:000001">
    <property type="entry name" value="Genome polyprotein"/>
    <property type="match status" value="1"/>
</dbReference>
<dbReference type="Gene3D" id="2.40.10.120">
    <property type="match status" value="1"/>
</dbReference>
<dbReference type="Gene3D" id="3.30.70.270">
    <property type="match status" value="2"/>
</dbReference>
<dbReference type="Gene3D" id="6.10.250.1610">
    <property type="match status" value="1"/>
</dbReference>
<dbReference type="Gene3D" id="6.10.250.1750">
    <property type="match status" value="1"/>
</dbReference>
<dbReference type="Gene3D" id="6.10.250.2920">
    <property type="match status" value="1"/>
</dbReference>
<dbReference type="Gene3D" id="2.20.25.210">
    <property type="entry name" value="Hepatitis C NS5A, domain 1B"/>
    <property type="match status" value="1"/>
</dbReference>
<dbReference type="Gene3D" id="4.10.710.10">
    <property type="entry name" value="Hepatitis C Virus Capsid Protein, Chain A"/>
    <property type="match status" value="1"/>
</dbReference>
<dbReference type="Gene3D" id="3.30.160.890">
    <property type="entry name" value="Hepatitis C virus envelope glycoprotein E1, chain C"/>
    <property type="match status" value="1"/>
</dbReference>
<dbReference type="Gene3D" id="2.30.30.710">
    <property type="entry name" value="Hepatitis C virus non-structural protein NS2, C-terminal domain"/>
    <property type="match status" value="1"/>
</dbReference>
<dbReference type="Gene3D" id="1.20.1280.150">
    <property type="entry name" value="Hepatitis C virus non-structural protein NS2, N-terminal domain"/>
    <property type="match status" value="1"/>
</dbReference>
<dbReference type="Gene3D" id="2.20.25.220">
    <property type="entry name" value="Hepatitis C virus NS5A, 1B domain"/>
    <property type="match status" value="1"/>
</dbReference>
<dbReference type="Gene3D" id="3.40.50.300">
    <property type="entry name" value="P-loop containing nucleotide triphosphate hydrolases"/>
    <property type="match status" value="2"/>
</dbReference>
<dbReference type="Gene3D" id="1.10.820.10">
    <property type="entry name" value="RNA Helicase Chain A , domain 3"/>
    <property type="match status" value="1"/>
</dbReference>
<dbReference type="Gene3D" id="2.40.10.10">
    <property type="entry name" value="Trypsin-like serine proteases"/>
    <property type="match status" value="1"/>
</dbReference>
<dbReference type="InterPro" id="IPR043502">
    <property type="entry name" value="DNA/RNA_pol_sf"/>
</dbReference>
<dbReference type="InterPro" id="IPR002521">
    <property type="entry name" value="HCV_Core_C"/>
</dbReference>
<dbReference type="InterPro" id="IPR044896">
    <property type="entry name" value="HCV_core_chain_A"/>
</dbReference>
<dbReference type="InterPro" id="IPR002522">
    <property type="entry name" value="HCV_core_N"/>
</dbReference>
<dbReference type="InterPro" id="IPR002519">
    <property type="entry name" value="HCV_Env"/>
</dbReference>
<dbReference type="InterPro" id="IPR002531">
    <property type="entry name" value="HCV_NS1"/>
</dbReference>
<dbReference type="InterPro" id="IPR002518">
    <property type="entry name" value="HCV_NS2"/>
</dbReference>
<dbReference type="InterPro" id="IPR042205">
    <property type="entry name" value="HCV_NS2_C"/>
</dbReference>
<dbReference type="InterPro" id="IPR042209">
    <property type="entry name" value="HCV_NS2_N"/>
</dbReference>
<dbReference type="InterPro" id="IPR000745">
    <property type="entry name" value="HCV_NS4a"/>
</dbReference>
<dbReference type="InterPro" id="IPR001490">
    <property type="entry name" value="HCV_NS4b"/>
</dbReference>
<dbReference type="InterPro" id="IPR002868">
    <property type="entry name" value="HCV_NS5a"/>
</dbReference>
<dbReference type="InterPro" id="IPR013192">
    <property type="entry name" value="HCV_NS5A_1a"/>
</dbReference>
<dbReference type="InterPro" id="IPR013193">
    <property type="entry name" value="HCV_NS5a_1B_dom"/>
</dbReference>
<dbReference type="InterPro" id="IPR038568">
    <property type="entry name" value="HCV_NS5A_1B_sf"/>
</dbReference>
<dbReference type="InterPro" id="IPR024350">
    <property type="entry name" value="HCV_NS5a_C"/>
</dbReference>
<dbReference type="InterPro" id="IPR049913">
    <property type="entry name" value="HCV_p7"/>
</dbReference>
<dbReference type="InterPro" id="IPR014001">
    <property type="entry name" value="Helicase_ATP-bd"/>
</dbReference>
<dbReference type="InterPro" id="IPR001650">
    <property type="entry name" value="Helicase_C-like"/>
</dbReference>
<dbReference type="InterPro" id="IPR004109">
    <property type="entry name" value="HepC_NS3_protease"/>
</dbReference>
<dbReference type="InterPro" id="IPR054175">
    <property type="entry name" value="NS3_helicase_C"/>
</dbReference>
<dbReference type="InterPro" id="IPR038170">
    <property type="entry name" value="NS5A_1a_sf"/>
</dbReference>
<dbReference type="InterPro" id="IPR027417">
    <property type="entry name" value="P-loop_NTPase"/>
</dbReference>
<dbReference type="InterPro" id="IPR009003">
    <property type="entry name" value="Peptidase_S1_PA"/>
</dbReference>
<dbReference type="InterPro" id="IPR043504">
    <property type="entry name" value="Peptidase_S1_PA_chymotrypsin"/>
</dbReference>
<dbReference type="InterPro" id="IPR043128">
    <property type="entry name" value="Rev_trsase/Diguanyl_cyclase"/>
</dbReference>
<dbReference type="InterPro" id="IPR007094">
    <property type="entry name" value="RNA-dir_pol_PSvirus"/>
</dbReference>
<dbReference type="InterPro" id="IPR002166">
    <property type="entry name" value="RNA_pol_HCV"/>
</dbReference>
<dbReference type="Pfam" id="PF01543">
    <property type="entry name" value="HCV_capsid"/>
    <property type="match status" value="1"/>
</dbReference>
<dbReference type="Pfam" id="PF01542">
    <property type="entry name" value="HCV_core"/>
    <property type="match status" value="1"/>
</dbReference>
<dbReference type="Pfam" id="PF01539">
    <property type="entry name" value="HCV_env"/>
    <property type="match status" value="1"/>
</dbReference>
<dbReference type="Pfam" id="PF01560">
    <property type="entry name" value="HCV_NS1"/>
    <property type="match status" value="1"/>
</dbReference>
<dbReference type="Pfam" id="PF01538">
    <property type="entry name" value="HCV_NS2"/>
    <property type="match status" value="1"/>
</dbReference>
<dbReference type="Pfam" id="PF01006">
    <property type="entry name" value="HCV_NS4a"/>
    <property type="match status" value="1"/>
</dbReference>
<dbReference type="Pfam" id="PF01001">
    <property type="entry name" value="HCV_NS4b"/>
    <property type="match status" value="1"/>
</dbReference>
<dbReference type="Pfam" id="PF01506">
    <property type="entry name" value="HCV_NS5a"/>
    <property type="match status" value="1"/>
</dbReference>
<dbReference type="Pfam" id="PF08300">
    <property type="entry name" value="HCV_NS5a_1a"/>
    <property type="match status" value="1"/>
</dbReference>
<dbReference type="Pfam" id="PF08301">
    <property type="entry name" value="HCV_NS5a_1b"/>
    <property type="match status" value="1"/>
</dbReference>
<dbReference type="Pfam" id="PF12941">
    <property type="entry name" value="HCV_NS5a_C"/>
    <property type="match status" value="1"/>
</dbReference>
<dbReference type="Pfam" id="PF22027">
    <property type="entry name" value="NS3_helicase_C"/>
    <property type="match status" value="1"/>
</dbReference>
<dbReference type="Pfam" id="PF02907">
    <property type="entry name" value="Peptidase_S29"/>
    <property type="match status" value="1"/>
</dbReference>
<dbReference type="Pfam" id="PF00998">
    <property type="entry name" value="RdRP_3"/>
    <property type="match status" value="1"/>
</dbReference>
<dbReference type="SMART" id="SM00487">
    <property type="entry name" value="DEXDc"/>
    <property type="match status" value="1"/>
</dbReference>
<dbReference type="SUPFAM" id="SSF56672">
    <property type="entry name" value="DNA/RNA polymerases"/>
    <property type="match status" value="1"/>
</dbReference>
<dbReference type="SUPFAM" id="SSF52540">
    <property type="entry name" value="P-loop containing nucleoside triphosphate hydrolases"/>
    <property type="match status" value="2"/>
</dbReference>
<dbReference type="SUPFAM" id="SSF50494">
    <property type="entry name" value="Trypsin-like serine proteases"/>
    <property type="match status" value="1"/>
</dbReference>
<dbReference type="PROSITE" id="PS51693">
    <property type="entry name" value="HCV_NS2_PRO"/>
    <property type="match status" value="1"/>
</dbReference>
<dbReference type="PROSITE" id="PS51192">
    <property type="entry name" value="HELICASE_ATP_BIND_1"/>
    <property type="match status" value="1"/>
</dbReference>
<dbReference type="PROSITE" id="PS51194">
    <property type="entry name" value="HELICASE_CTER"/>
    <property type="match status" value="1"/>
</dbReference>
<dbReference type="PROSITE" id="PS51822">
    <property type="entry name" value="HV_PV_NS3_PRO"/>
    <property type="match status" value="1"/>
</dbReference>
<dbReference type="PROSITE" id="PS50507">
    <property type="entry name" value="RDRP_SSRNA_POS"/>
    <property type="match status" value="1"/>
</dbReference>
<keyword id="KW-0002">3D-structure</keyword>
<keyword id="KW-0007">Acetylation</keyword>
<keyword id="KW-1072">Activation of host autophagy by virus</keyword>
<keyword id="KW-0053">Apoptosis</keyword>
<keyword id="KW-0067">ATP-binding</keyword>
<keyword id="KW-0167">Capsid protein</keyword>
<keyword id="KW-1165">Clathrin-mediated endocytosis of virus by host</keyword>
<keyword id="KW-1015">Disulfide bond</keyword>
<keyword id="KW-1170">Fusion of virus membrane with host endosomal membrane</keyword>
<keyword id="KW-1168">Fusion of virus membrane with host membrane</keyword>
<keyword id="KW-1078">G1/S host cell cycle checkpoint dysregulation by virus</keyword>
<keyword id="KW-0325">Glycoprotein</keyword>
<keyword id="KW-0347">Helicase</keyword>
<keyword id="KW-1032">Host cell membrane</keyword>
<keyword id="KW-1035">Host cytoplasm</keyword>
<keyword id="KW-1038">Host endoplasmic reticulum</keyword>
<keyword id="KW-1041">Host lipid droplet</keyword>
<keyword id="KW-1043">Host membrane</keyword>
<keyword id="KW-1045">Host mitochondrion</keyword>
<keyword id="KW-1048">Host nucleus</keyword>
<keyword id="KW-0945">Host-virus interaction</keyword>
<keyword id="KW-0378">Hydrolase</keyword>
<keyword id="KW-1090">Inhibition of host innate immune response by virus</keyword>
<keyword id="KW-1114">Inhibition of host interferon signaling pathway by virus</keyword>
<keyword id="KW-1097">Inhibition of host MAVS by virus</keyword>
<keyword id="KW-1113">Inhibition of host RLR pathway by virus</keyword>
<keyword id="KW-1105">Inhibition of host STAT1 by virus</keyword>
<keyword id="KW-1110">Inhibition of host TRAFs by virus</keyword>
<keyword id="KW-0922">Interferon antiviral system evasion</keyword>
<keyword id="KW-0407">Ion channel</keyword>
<keyword id="KW-0406">Ion transport</keyword>
<keyword id="KW-1017">Isopeptide bond</keyword>
<keyword id="KW-0449">Lipoprotein</keyword>
<keyword id="KW-0460">Magnesium</keyword>
<keyword id="KW-0472">Membrane</keyword>
<keyword id="KW-0479">Metal-binding</keyword>
<keyword id="KW-1121">Modulation of host cell cycle by virus</keyword>
<keyword id="KW-0511">Multifunctional enzyme</keyword>
<keyword id="KW-0547">Nucleotide-binding</keyword>
<keyword id="KW-0548">Nucleotidyltransferase</keyword>
<keyword id="KW-0553">Oncogene</keyword>
<keyword id="KW-0564">Palmitate</keyword>
<keyword id="KW-0597">Phosphoprotein</keyword>
<keyword id="KW-0645">Protease</keyword>
<keyword id="KW-0687">Ribonucleoprotein</keyword>
<keyword id="KW-0694">RNA-binding</keyword>
<keyword id="KW-0696">RNA-directed RNA polymerase</keyword>
<keyword id="KW-0720">Serine protease</keyword>
<keyword id="KW-0729">SH3-binding</keyword>
<keyword id="KW-0788">Thiol protease</keyword>
<keyword id="KW-0804">Transcription</keyword>
<keyword id="KW-0805">Transcription regulation</keyword>
<keyword id="KW-0808">Transferase</keyword>
<keyword id="KW-0812">Transmembrane</keyword>
<keyword id="KW-1133">Transmembrane helix</keyword>
<keyword id="KW-0813">Transport</keyword>
<keyword id="KW-0832">Ubl conjugation</keyword>
<keyword id="KW-1161">Viral attachment to host cell</keyword>
<keyword id="KW-0261">Viral envelope protein</keyword>
<keyword id="KW-0899">Viral immunoevasion</keyword>
<keyword id="KW-1182">Viral ion channel</keyword>
<keyword id="KW-0543">Viral nucleoprotein</keyword>
<keyword id="KW-1162">Viral penetration into host cytoplasm</keyword>
<keyword id="KW-0693">Viral RNA replication</keyword>
<keyword id="KW-0946">Virion</keyword>
<keyword id="KW-1164">Virus endocytosis by host</keyword>
<keyword id="KW-1160">Virus entry into host cell</keyword>
<keyword id="KW-0862">Zinc</keyword>
<protein>
    <recommendedName>
        <fullName>Genome polyprotein</fullName>
    </recommendedName>
    <component>
        <recommendedName>
            <fullName>Core protein precursor</fullName>
        </recommendedName>
        <alternativeName>
            <fullName>Capsid protein C</fullName>
        </alternativeName>
        <alternativeName>
            <fullName>p23</fullName>
        </alternativeName>
    </component>
    <component>
        <recommendedName>
            <fullName>Mature core protein</fullName>
        </recommendedName>
        <alternativeName>
            <fullName>p21</fullName>
        </alternativeName>
    </component>
    <component>
        <recommendedName>
            <fullName>Envelope glycoprotein E1</fullName>
        </recommendedName>
        <alternativeName>
            <fullName>gp32</fullName>
        </alternativeName>
        <alternativeName>
            <fullName>gp35</fullName>
        </alternativeName>
    </component>
    <component>
        <recommendedName>
            <fullName>Envelope glycoprotein E2</fullName>
        </recommendedName>
        <alternativeName>
            <fullName>NS1</fullName>
        </alternativeName>
        <alternativeName>
            <fullName>gp68</fullName>
        </alternativeName>
        <alternativeName>
            <fullName>gp70</fullName>
        </alternativeName>
    </component>
    <component>
        <recommendedName>
            <fullName>Viroporin p7</fullName>
        </recommendedName>
    </component>
    <component>
        <recommendedName>
            <fullName>Protease NS2</fullName>
            <shortName>p23</shortName>
            <ecNumber evidence="4">3.4.22.-</ecNumber>
        </recommendedName>
        <alternativeName>
            <fullName>Non-structural protein 2</fullName>
            <shortName>NS2</shortName>
        </alternativeName>
    </component>
    <component>
        <recommendedName>
            <fullName>Serine protease/helicase NS3</fullName>
            <ecNumber evidence="6">3.4.21.98</ecNumber>
            <ecNumber evidence="6">3.6.1.15</ecNumber>
            <ecNumber evidence="6">3.6.4.13</ecNumber>
        </recommendedName>
        <alternativeName>
            <fullName>Hepacivirin</fullName>
        </alternativeName>
        <alternativeName>
            <fullName evidence="6">NS3 helicase</fullName>
        </alternativeName>
        <alternativeName>
            <fullName evidence="6">NS3 protease</fullName>
        </alternativeName>
        <alternativeName>
            <fullName>NS3P</fullName>
        </alternativeName>
        <alternativeName>
            <fullName>Viroporin p70</fullName>
        </alternativeName>
    </component>
    <component>
        <recommendedName>
            <fullName>Non-structural protein 4A</fullName>
            <shortName>NS4A</shortName>
        </recommendedName>
        <alternativeName>
            <fullName>p8</fullName>
        </alternativeName>
    </component>
    <component>
        <recommendedName>
            <fullName>Non-structural protein 4B</fullName>
            <shortName>NS4B</shortName>
        </recommendedName>
        <alternativeName>
            <fullName>p27</fullName>
        </alternativeName>
    </component>
    <component>
        <recommendedName>
            <fullName>Non-structural protein 5A</fullName>
            <shortName>NS5A</shortName>
        </recommendedName>
        <alternativeName>
            <fullName>p56/58</fullName>
        </alternativeName>
    </component>
    <component>
        <recommendedName>
            <fullName>RNA-directed RNA polymerase</fullName>
            <ecNumber evidence="6">2.7.7.48</ecNumber>
        </recommendedName>
        <alternativeName>
            <fullName>NS5B</fullName>
        </alternativeName>
        <alternativeName>
            <fullName>p68</fullName>
        </alternativeName>
    </component>
</protein>